<name>PKD2_MOUSE</name>
<gene>
    <name evidence="39" type="primary">Pkd2</name>
    <name evidence="36 39" type="synonym">TRPP2</name>
</gene>
<feature type="chain" id="PRO_0000164357" description="Polycystin-2">
    <location>
        <begin position="1"/>
        <end position="966"/>
    </location>
</feature>
<feature type="topological domain" description="Cytoplasmic" evidence="1">
    <location>
        <begin position="1"/>
        <end position="217"/>
    </location>
</feature>
<feature type="transmembrane region" description="Helical; Name=S1" evidence="1">
    <location>
        <begin position="218"/>
        <end position="239"/>
    </location>
</feature>
<feature type="topological domain" description="Extracellular" evidence="1">
    <location>
        <begin position="240"/>
        <end position="466"/>
    </location>
</feature>
<feature type="transmembrane region" description="Helical; Name=S2" evidence="1">
    <location>
        <begin position="467"/>
        <end position="487"/>
    </location>
</feature>
<feature type="topological domain" description="Cytoplasmic" evidence="1">
    <location>
        <begin position="488"/>
        <end position="503"/>
    </location>
</feature>
<feature type="transmembrane region" description="Helical; Name=S3" evidence="1">
    <location>
        <begin position="504"/>
        <end position="524"/>
    </location>
</feature>
<feature type="topological domain" description="Extracellular" evidence="1">
    <location>
        <begin position="525"/>
        <end position="550"/>
    </location>
</feature>
<feature type="transmembrane region" description="Helical; Name=S4" evidence="1">
    <location>
        <begin position="551"/>
        <end position="571"/>
    </location>
</feature>
<feature type="topological domain" description="Cytoplasmic" evidence="1">
    <location>
        <begin position="572"/>
        <end position="595"/>
    </location>
</feature>
<feature type="transmembrane region" description="Helical; Name=5" evidence="1">
    <location>
        <begin position="596"/>
        <end position="617"/>
    </location>
</feature>
<feature type="topological domain" description="Extracellular" evidence="1">
    <location>
        <begin position="618"/>
        <end position="629"/>
    </location>
</feature>
<feature type="intramembrane region" description="Pore-forming" evidence="1">
    <location>
        <begin position="630"/>
        <end position="644"/>
    </location>
</feature>
<feature type="topological domain" description="Extracellular" evidence="1">
    <location>
        <begin position="645"/>
        <end position="652"/>
    </location>
</feature>
<feature type="transmembrane region" description="Helical; Name=S6" evidence="1">
    <location>
        <begin position="653"/>
        <end position="673"/>
    </location>
</feature>
<feature type="topological domain" description="Cytoplasmic" evidence="1">
    <location>
        <begin position="674"/>
        <end position="966"/>
    </location>
</feature>
<feature type="domain" description="EF-hand" evidence="3">
    <location>
        <begin position="748"/>
        <end position="783"/>
    </location>
</feature>
<feature type="region of interest" description="Disordered" evidence="4">
    <location>
        <begin position="1"/>
        <end position="106"/>
    </location>
</feature>
<feature type="region of interest" description="Disordered" evidence="4">
    <location>
        <begin position="147"/>
        <end position="179"/>
    </location>
</feature>
<feature type="region of interest" description="Disordered" evidence="4">
    <location>
        <begin position="764"/>
        <end position="828"/>
    </location>
</feature>
<feature type="region of interest" description="Linker" evidence="1">
    <location>
        <begin position="801"/>
        <end position="820"/>
    </location>
</feature>
<feature type="region of interest" description="Important for interaction with PACS1 and PACS2" evidence="1">
    <location>
        <begin position="808"/>
        <end position="819"/>
    </location>
</feature>
<feature type="region of interest" description="Disordered" evidence="4">
    <location>
        <begin position="914"/>
        <end position="966"/>
    </location>
</feature>
<feature type="coiled-coil region" evidence="1">
    <location>
        <begin position="831"/>
        <end position="870"/>
    </location>
</feature>
<feature type="short sequence motif" description="Selectivity filter" evidence="1">
    <location>
        <begin position="639"/>
        <end position="641"/>
    </location>
</feature>
<feature type="compositionally biased region" description="Gly residues" evidence="4">
    <location>
        <begin position="30"/>
        <end position="44"/>
    </location>
</feature>
<feature type="compositionally biased region" description="Basic and acidic residues" evidence="4">
    <location>
        <begin position="46"/>
        <end position="56"/>
    </location>
</feature>
<feature type="compositionally biased region" description="Low complexity" evidence="4">
    <location>
        <begin position="58"/>
        <end position="79"/>
    </location>
</feature>
<feature type="compositionally biased region" description="Acidic residues" evidence="4">
    <location>
        <begin position="91"/>
        <end position="105"/>
    </location>
</feature>
<feature type="compositionally biased region" description="Basic and acidic residues" evidence="4">
    <location>
        <begin position="768"/>
        <end position="793"/>
    </location>
</feature>
<feature type="compositionally biased region" description="Low complexity" evidence="4">
    <location>
        <begin position="794"/>
        <end position="805"/>
    </location>
</feature>
<feature type="compositionally biased region" description="Polar residues" evidence="4">
    <location>
        <begin position="919"/>
        <end position="931"/>
    </location>
</feature>
<feature type="binding site" evidence="1">
    <location>
        <position position="555"/>
    </location>
    <ligand>
        <name>cholesterol</name>
        <dbReference type="ChEBI" id="CHEBI:16113"/>
    </ligand>
</feature>
<feature type="binding site" evidence="1">
    <location>
        <position position="639"/>
    </location>
    <ligand>
        <name>Ca(2+)</name>
        <dbReference type="ChEBI" id="CHEBI:29108"/>
        <label>1</label>
        <note>ligand shared between homotetrameric partners</note>
    </ligand>
</feature>
<feature type="binding site" evidence="1">
    <location>
        <position position="761"/>
    </location>
    <ligand>
        <name>Ca(2+)</name>
        <dbReference type="ChEBI" id="CHEBI:29108"/>
        <label>2</label>
    </ligand>
</feature>
<feature type="binding site" evidence="1">
    <location>
        <position position="763"/>
    </location>
    <ligand>
        <name>Ca(2+)</name>
        <dbReference type="ChEBI" id="CHEBI:29108"/>
        <label>2</label>
    </ligand>
</feature>
<feature type="binding site" evidence="1">
    <location>
        <position position="765"/>
    </location>
    <ligand>
        <name>Ca(2+)</name>
        <dbReference type="ChEBI" id="CHEBI:29108"/>
        <label>2</label>
    </ligand>
</feature>
<feature type="binding site" evidence="1">
    <location>
        <position position="767"/>
    </location>
    <ligand>
        <name>Ca(2+)</name>
        <dbReference type="ChEBI" id="CHEBI:29108"/>
        <label>2</label>
    </ligand>
</feature>
<feature type="binding site" evidence="1">
    <location>
        <position position="772"/>
    </location>
    <ligand>
        <name>Ca(2+)</name>
        <dbReference type="ChEBI" id="CHEBI:29108"/>
        <label>2</label>
    </ligand>
</feature>
<feature type="modified residue" description="Phosphoserine" evidence="1">
    <location>
        <position position="72"/>
    </location>
</feature>
<feature type="modified residue" description="Phosphoserine" evidence="1">
    <location>
        <position position="76"/>
    </location>
</feature>
<feature type="modified residue" description="Omega-N-methylarginine" evidence="41">
    <location>
        <position position="135"/>
    </location>
</feature>
<feature type="modified residue" description="Phosphoserine" evidence="1">
    <location>
        <position position="799"/>
    </location>
</feature>
<feature type="modified residue" description="Phosphoserine" evidence="40">
    <location>
        <position position="806"/>
    </location>
</feature>
<feature type="modified residue" description="Phosphoserine" evidence="40">
    <location>
        <position position="810"/>
    </location>
</feature>
<feature type="modified residue" description="Phosphoserine" evidence="40">
    <location>
        <position position="827"/>
    </location>
</feature>
<feature type="glycosylation site" description="N-linked (GlcNAc...) asparagine" evidence="2">
    <location>
        <position position="297"/>
    </location>
</feature>
<feature type="glycosylation site" description="N-linked (GlcNAc...) asparagine" evidence="2">
    <location>
        <position position="303"/>
    </location>
</feature>
<feature type="glycosylation site" description="N-linked (GlcNAc...) asparagine" evidence="2">
    <location>
        <position position="326"/>
    </location>
</feature>
<feature type="glycosylation site" description="N-linked (GlcNAc...) asparagine" evidence="2">
    <location>
        <position position="360"/>
    </location>
</feature>
<feature type="glycosylation site" description="N-linked (GlcNAc...) asparagine" evidence="2">
    <location>
        <position position="373"/>
    </location>
</feature>
<feature type="disulfide bond" evidence="1">
    <location>
        <begin position="329"/>
        <end position="342"/>
    </location>
</feature>
<feature type="splice variant" id="VSP_042485" description="In isoform 2." evidence="37">
    <original>CEIIFCFF</original>
    <variation>FICSSYGD</variation>
    <location>
        <begin position="474"/>
        <end position="481"/>
    </location>
</feature>
<feature type="splice variant" id="VSP_042486" description="In isoform 2." evidence="37">
    <location>
        <begin position="482"/>
        <end position="966"/>
    </location>
</feature>
<feature type="splice variant" id="VSP_042487" description="In isoform 3." evidence="35">
    <location>
        <begin position="515"/>
        <end position="570"/>
    </location>
</feature>
<feature type="splice variant" id="VSP_042488" description="In isoform 4." evidence="37">
    <original>IFTQFRIILGDINF</original>
    <variation>IICSWRSSMIRTLK</variation>
    <location>
        <begin position="631"/>
        <end position="644"/>
    </location>
</feature>
<feature type="splice variant" id="VSP_042489" description="In isoform 4." evidence="37">
    <location>
        <begin position="645"/>
        <end position="966"/>
    </location>
</feature>
<feature type="splice variant" id="VSP_042490" description="In isoform 5." evidence="37">
    <location>
        <begin position="746"/>
        <end position="839"/>
    </location>
</feature>
<feature type="mutagenesis site" description="No effect on location at nodal cilia and can rescue the laterality defect of null mutants. Abolishes location at nodal cilia and cannot complement the laterality defect of null mutants; when associated with DEL 819-966." evidence="22">
    <original>R</original>
    <variation>G</variation>
    <location>
        <position position="6"/>
    </location>
</feature>
<feature type="mutagenesis site" description="In lrm4; mice exhibit gross left-right abnormalities. Embryos do not show defects in kidney development. The nodes appear normal. Abolishes location at nodal cilia, but does not affect interaction with Pkd1l1." evidence="20 22">
    <original>E</original>
    <variation>G</variation>
    <location>
        <position position="442"/>
    </location>
</feature>
<feature type="mutagenesis site" description="Abolishes location at nodal cilia and cannot complement the laterality defect of null mutants." evidence="22">
    <original>D</original>
    <variation>V</variation>
    <location>
        <position position="509"/>
    </location>
</feature>
<feature type="mutagenesis site" description="Abolishes location at nodal cilia and cannot complement the laterality defect of null mutants; when associated with G-6." evidence="22">
    <location>
        <begin position="819"/>
        <end position="966"/>
    </location>
</feature>
<feature type="sequence conflict" description="In Ref. 1; AAC53388." evidence="37" ref="1">
    <original>M</original>
    <variation>I</variation>
    <location>
        <position position="365"/>
    </location>
</feature>
<feature type="sequence conflict" description="In Ref. 1; AAC53388." evidence="37" ref="1">
    <original>K</original>
    <variation>R</variation>
    <location>
        <position position="370"/>
    </location>
</feature>
<feature type="sequence conflict" description="In Ref. 1; AAC53388." evidence="37" ref="1">
    <original>S</original>
    <variation>A</variation>
    <location>
        <position position="560"/>
    </location>
</feature>
<feature type="sequence conflict" description="In Ref. 2; CAA74551." evidence="37" ref="2">
    <original>DL</original>
    <variation>SV</variation>
    <location>
        <begin position="688"/>
        <end position="689"/>
    </location>
</feature>
<feature type="sequence conflict" description="In Ref. 2; CAA73727/CAA74551 and 3; ACN11624." evidence="37" ref="2 3">
    <original>K</original>
    <variation>E</variation>
    <location>
        <position position="746"/>
    </location>
</feature>
<feature type="sequence conflict" description="In Ref. 4; BAC35407." evidence="37" ref="4">
    <original>S</original>
    <variation>N</variation>
    <location>
        <position position="800"/>
    </location>
</feature>
<feature type="sequence conflict" description="In Ref. 1; AAC53388." evidence="37" ref="1">
    <original>P</original>
    <variation>S</variation>
    <location>
        <position position="942"/>
    </location>
</feature>
<feature type="sequence conflict" description="In Ref. 1; AAC53388." evidence="37" ref="1">
    <original>G</original>
    <variation>S</variation>
    <location>
        <position position="957"/>
    </location>
</feature>
<organism>
    <name type="scientific">Mus musculus</name>
    <name type="common">Mouse</name>
    <dbReference type="NCBI Taxonomy" id="10090"/>
    <lineage>
        <taxon>Eukaryota</taxon>
        <taxon>Metazoa</taxon>
        <taxon>Chordata</taxon>
        <taxon>Craniata</taxon>
        <taxon>Vertebrata</taxon>
        <taxon>Euteleostomi</taxon>
        <taxon>Mammalia</taxon>
        <taxon>Eutheria</taxon>
        <taxon>Euarchontoglires</taxon>
        <taxon>Glires</taxon>
        <taxon>Rodentia</taxon>
        <taxon>Myomorpha</taxon>
        <taxon>Muroidea</taxon>
        <taxon>Muridae</taxon>
        <taxon>Murinae</taxon>
        <taxon>Mus</taxon>
        <taxon>Mus</taxon>
    </lineage>
</organism>
<accession>O35245</accession>
<accession>C0KJK2</accession>
<accession>E9Q4F6</accession>
<accession>E9QQA3</accession>
<accession>Q8BPR6</accession>
<accession>Q9ES37</accession>
<accession>Q9QWP0</accession>
<accession>Q9Z193</accession>
<accession>Q9Z194</accession>
<dbReference type="EMBL" id="AF014010">
    <property type="protein sequence ID" value="AAC53388.1"/>
    <property type="molecule type" value="mRNA"/>
</dbReference>
<dbReference type="EMBL" id="Y13278">
    <property type="protein sequence ID" value="CAA73727.1"/>
    <property type="molecule type" value="mRNA"/>
</dbReference>
<dbReference type="EMBL" id="Y14105">
    <property type="protein sequence ID" value="CAA74551.1"/>
    <property type="molecule type" value="Genomic_DNA"/>
</dbReference>
<dbReference type="EMBL" id="Y14106">
    <property type="protein sequence ID" value="CAA74551.1"/>
    <property type="status" value="JOINED"/>
    <property type="molecule type" value="Genomic_DNA"/>
</dbReference>
<dbReference type="EMBL" id="Y14107">
    <property type="protein sequence ID" value="CAA74551.1"/>
    <property type="status" value="JOINED"/>
    <property type="molecule type" value="Genomic_DNA"/>
</dbReference>
<dbReference type="EMBL" id="Y14108">
    <property type="protein sequence ID" value="CAA74551.1"/>
    <property type="status" value="JOINED"/>
    <property type="molecule type" value="Genomic_DNA"/>
</dbReference>
<dbReference type="EMBL" id="Y14109">
    <property type="protein sequence ID" value="CAA74551.1"/>
    <property type="status" value="JOINED"/>
    <property type="molecule type" value="Genomic_DNA"/>
</dbReference>
<dbReference type="EMBL" id="Y14110">
    <property type="protein sequence ID" value="CAA74551.1"/>
    <property type="status" value="JOINED"/>
    <property type="molecule type" value="Genomic_DNA"/>
</dbReference>
<dbReference type="EMBL" id="Y14111">
    <property type="protein sequence ID" value="CAA74551.1"/>
    <property type="status" value="JOINED"/>
    <property type="molecule type" value="Genomic_DNA"/>
</dbReference>
<dbReference type="EMBL" id="Y14112">
    <property type="protein sequence ID" value="CAA74551.1"/>
    <property type="status" value="JOINED"/>
    <property type="molecule type" value="Genomic_DNA"/>
</dbReference>
<dbReference type="EMBL" id="Y14113">
    <property type="protein sequence ID" value="CAA74551.1"/>
    <property type="status" value="JOINED"/>
    <property type="molecule type" value="Genomic_DNA"/>
</dbReference>
<dbReference type="EMBL" id="Y14114">
    <property type="protein sequence ID" value="CAA74551.1"/>
    <property type="status" value="JOINED"/>
    <property type="molecule type" value="Genomic_DNA"/>
</dbReference>
<dbReference type="EMBL" id="Y14115">
    <property type="protein sequence ID" value="CAA74551.1"/>
    <property type="status" value="JOINED"/>
    <property type="molecule type" value="Genomic_DNA"/>
</dbReference>
<dbReference type="EMBL" id="Y14116">
    <property type="protein sequence ID" value="CAA74551.1"/>
    <property type="status" value="JOINED"/>
    <property type="molecule type" value="Genomic_DNA"/>
</dbReference>
<dbReference type="EMBL" id="Y14117">
    <property type="protein sequence ID" value="CAA74551.1"/>
    <property type="status" value="JOINED"/>
    <property type="molecule type" value="Genomic_DNA"/>
</dbReference>
<dbReference type="EMBL" id="Y14118">
    <property type="protein sequence ID" value="CAA74551.1"/>
    <property type="status" value="JOINED"/>
    <property type="molecule type" value="Genomic_DNA"/>
</dbReference>
<dbReference type="EMBL" id="Y14119">
    <property type="protein sequence ID" value="CAA74551.1"/>
    <property type="status" value="JOINED"/>
    <property type="molecule type" value="Genomic_DNA"/>
</dbReference>
<dbReference type="EMBL" id="Y14120">
    <property type="protein sequence ID" value="CAA74552.1"/>
    <property type="molecule type" value="mRNA"/>
</dbReference>
<dbReference type="EMBL" id="FJ609779">
    <property type="protein sequence ID" value="ACN11624.1"/>
    <property type="molecule type" value="mRNA"/>
</dbReference>
<dbReference type="EMBL" id="AK053502">
    <property type="protein sequence ID" value="BAC35407.1"/>
    <property type="molecule type" value="mRNA"/>
</dbReference>
<dbReference type="EMBL" id="AC123687">
    <property type="status" value="NOT_ANNOTATED_CDS"/>
    <property type="molecule type" value="Genomic_DNA"/>
</dbReference>
<dbReference type="EMBL" id="AC124106">
    <property type="status" value="NOT_ANNOTATED_CDS"/>
    <property type="molecule type" value="Genomic_DNA"/>
</dbReference>
<dbReference type="EMBL" id="AF242389">
    <property type="protein sequence ID" value="AAG13267.1"/>
    <property type="molecule type" value="Genomic_DNA"/>
</dbReference>
<dbReference type="CCDS" id="CCDS19487.1">
    <molecule id="O35245-1"/>
</dbReference>
<dbReference type="RefSeq" id="NP_032887.3">
    <molecule id="O35245-1"/>
    <property type="nucleotide sequence ID" value="NM_008861.3"/>
</dbReference>
<dbReference type="RefSeq" id="XP_006534878.1">
    <molecule id="O35245-3"/>
    <property type="nucleotide sequence ID" value="XM_006534815.5"/>
</dbReference>
<dbReference type="SMR" id="O35245"/>
<dbReference type="BioGRID" id="202205">
    <property type="interactions" value="18"/>
</dbReference>
<dbReference type="ComplexPortal" id="CPX-4041">
    <property type="entry name" value="PKD1-PKD2 Polycystin complex"/>
</dbReference>
<dbReference type="CORUM" id="O35245"/>
<dbReference type="DIP" id="DIP-60904N"/>
<dbReference type="FunCoup" id="O35245">
    <property type="interactions" value="748"/>
</dbReference>
<dbReference type="IntAct" id="O35245">
    <property type="interactions" value="5"/>
</dbReference>
<dbReference type="MINT" id="O35245"/>
<dbReference type="STRING" id="10090.ENSMUSP00000084041"/>
<dbReference type="GlyCosmos" id="O35245">
    <property type="glycosylation" value="5 sites, No reported glycans"/>
</dbReference>
<dbReference type="GlyGen" id="O35245">
    <property type="glycosylation" value="5 sites, 2 N-linked glycans (2 sites)"/>
</dbReference>
<dbReference type="iPTMnet" id="O35245"/>
<dbReference type="PhosphoSitePlus" id="O35245"/>
<dbReference type="PaxDb" id="10090-ENSMUSP00000084041"/>
<dbReference type="PeptideAtlas" id="O35245"/>
<dbReference type="ProteomicsDB" id="288216">
    <molecule id="O35245-1"/>
</dbReference>
<dbReference type="ProteomicsDB" id="288217">
    <molecule id="O35245-2"/>
</dbReference>
<dbReference type="ProteomicsDB" id="288218">
    <molecule id="O35245-3"/>
</dbReference>
<dbReference type="ProteomicsDB" id="288219">
    <molecule id="O35245-4"/>
</dbReference>
<dbReference type="ProteomicsDB" id="288220">
    <molecule id="O35245-5"/>
</dbReference>
<dbReference type="Pumba" id="O35245"/>
<dbReference type="Antibodypedia" id="3871">
    <property type="antibodies" value="347 antibodies from 35 providers"/>
</dbReference>
<dbReference type="DNASU" id="18764"/>
<dbReference type="Ensembl" id="ENSMUST00000086831.4">
    <molecule id="O35245-1"/>
    <property type="protein sequence ID" value="ENSMUSP00000084041.4"/>
    <property type="gene ID" value="ENSMUSG00000034462.10"/>
</dbReference>
<dbReference type="GeneID" id="18764"/>
<dbReference type="KEGG" id="mmu:18764"/>
<dbReference type="UCSC" id="uc012eab.1">
    <molecule id="O35245-1"/>
    <property type="organism name" value="mouse"/>
</dbReference>
<dbReference type="UCSC" id="uc012eac.1">
    <molecule id="O35245-3"/>
    <property type="organism name" value="mouse"/>
</dbReference>
<dbReference type="AGR" id="MGI:1099818"/>
<dbReference type="CTD" id="5311"/>
<dbReference type="MGI" id="MGI:1099818">
    <property type="gene designation" value="Pkd2"/>
</dbReference>
<dbReference type="VEuPathDB" id="HostDB:ENSMUSG00000034462"/>
<dbReference type="eggNOG" id="KOG3599">
    <property type="taxonomic scope" value="Eukaryota"/>
</dbReference>
<dbReference type="GeneTree" id="ENSGT00940000159025"/>
<dbReference type="HOGENOM" id="CLU_012097_0_0_1"/>
<dbReference type="InParanoid" id="O35245"/>
<dbReference type="OMA" id="RHEHRSC"/>
<dbReference type="OrthoDB" id="444119at2759"/>
<dbReference type="PhylomeDB" id="O35245"/>
<dbReference type="TreeFam" id="TF316484"/>
<dbReference type="Reactome" id="R-MMU-5620916">
    <property type="pathway name" value="VxPx cargo-targeting to cilium"/>
</dbReference>
<dbReference type="BioGRID-ORCS" id="18764">
    <property type="hits" value="4 hits in 78 CRISPR screens"/>
</dbReference>
<dbReference type="ChiTaRS" id="Pkd2">
    <property type="organism name" value="mouse"/>
</dbReference>
<dbReference type="PRO" id="PR:O35245"/>
<dbReference type="Proteomes" id="UP000000589">
    <property type="component" value="Chromosome 5"/>
</dbReference>
<dbReference type="RNAct" id="O35245">
    <property type="molecule type" value="protein"/>
</dbReference>
<dbReference type="Bgee" id="ENSMUSG00000034462">
    <property type="expression patterns" value="Expressed in ciliary body and 274 other cell types or tissues"/>
</dbReference>
<dbReference type="GO" id="GO:0045180">
    <property type="term" value="C:basal cortex"/>
    <property type="evidence" value="ECO:0000314"/>
    <property type="project" value="BHF-UCL"/>
</dbReference>
<dbReference type="GO" id="GO:0016323">
    <property type="term" value="C:basolateral plasma membrane"/>
    <property type="evidence" value="ECO:0007669"/>
    <property type="project" value="UniProtKB-SubCell"/>
</dbReference>
<dbReference type="GO" id="GO:0034703">
    <property type="term" value="C:cation channel complex"/>
    <property type="evidence" value="ECO:0000250"/>
    <property type="project" value="UniProtKB"/>
</dbReference>
<dbReference type="GO" id="GO:0036064">
    <property type="term" value="C:ciliary basal body"/>
    <property type="evidence" value="ECO:0000314"/>
    <property type="project" value="MGI"/>
</dbReference>
<dbReference type="GO" id="GO:0060170">
    <property type="term" value="C:ciliary membrane"/>
    <property type="evidence" value="ECO:0000315"/>
    <property type="project" value="UniProtKB"/>
</dbReference>
<dbReference type="GO" id="GO:0005929">
    <property type="term" value="C:cilium"/>
    <property type="evidence" value="ECO:0000314"/>
    <property type="project" value="UniProtKB"/>
</dbReference>
<dbReference type="GO" id="GO:0005737">
    <property type="term" value="C:cytoplasm"/>
    <property type="evidence" value="ECO:0000314"/>
    <property type="project" value="BHF-UCL"/>
</dbReference>
<dbReference type="GO" id="GO:0098554">
    <property type="term" value="C:cytoplasmic side of endoplasmic reticulum membrane"/>
    <property type="evidence" value="ECO:0007669"/>
    <property type="project" value="Ensembl"/>
</dbReference>
<dbReference type="GO" id="GO:0030659">
    <property type="term" value="C:cytoplasmic vesicle membrane"/>
    <property type="evidence" value="ECO:0007669"/>
    <property type="project" value="UniProtKB-SubCell"/>
</dbReference>
<dbReference type="GO" id="GO:0005829">
    <property type="term" value="C:cytosol"/>
    <property type="evidence" value="ECO:0007669"/>
    <property type="project" value="Ensembl"/>
</dbReference>
<dbReference type="GO" id="GO:0005783">
    <property type="term" value="C:endoplasmic reticulum"/>
    <property type="evidence" value="ECO:0000314"/>
    <property type="project" value="UniProtKB"/>
</dbReference>
<dbReference type="GO" id="GO:0070062">
    <property type="term" value="C:extracellular exosome"/>
    <property type="evidence" value="ECO:0000250"/>
    <property type="project" value="UniProtKB"/>
</dbReference>
<dbReference type="GO" id="GO:0005794">
    <property type="term" value="C:Golgi apparatus"/>
    <property type="evidence" value="ECO:0000314"/>
    <property type="project" value="UniProtKB"/>
</dbReference>
<dbReference type="GO" id="GO:0030027">
    <property type="term" value="C:lamellipodium"/>
    <property type="evidence" value="ECO:0007669"/>
    <property type="project" value="Ensembl"/>
</dbReference>
<dbReference type="GO" id="GO:0098553">
    <property type="term" value="C:lumenal side of endoplasmic reticulum membrane"/>
    <property type="evidence" value="ECO:0007669"/>
    <property type="project" value="Ensembl"/>
</dbReference>
<dbReference type="GO" id="GO:0016020">
    <property type="term" value="C:membrane"/>
    <property type="evidence" value="ECO:0000266"/>
    <property type="project" value="ComplexPortal"/>
</dbReference>
<dbReference type="GO" id="GO:0140494">
    <property type="term" value="C:migrasome"/>
    <property type="evidence" value="ECO:0000250"/>
    <property type="project" value="UniProtKB"/>
</dbReference>
<dbReference type="GO" id="GO:0072686">
    <property type="term" value="C:mitotic spindle"/>
    <property type="evidence" value="ECO:0000314"/>
    <property type="project" value="BHF-UCL"/>
</dbReference>
<dbReference type="GO" id="GO:0031514">
    <property type="term" value="C:motile cilium"/>
    <property type="evidence" value="ECO:0000314"/>
    <property type="project" value="MGI"/>
</dbReference>
<dbReference type="GO" id="GO:0097730">
    <property type="term" value="C:non-motile cilium"/>
    <property type="evidence" value="ECO:0000314"/>
    <property type="project" value="MGI"/>
</dbReference>
<dbReference type="GO" id="GO:0005886">
    <property type="term" value="C:plasma membrane"/>
    <property type="evidence" value="ECO:0000314"/>
    <property type="project" value="MGI"/>
</dbReference>
<dbReference type="GO" id="GO:0002133">
    <property type="term" value="C:polycystin complex"/>
    <property type="evidence" value="ECO:0000314"/>
    <property type="project" value="UniProtKB"/>
</dbReference>
<dbReference type="GO" id="GO:0042805">
    <property type="term" value="F:actinin binding"/>
    <property type="evidence" value="ECO:0007669"/>
    <property type="project" value="Ensembl"/>
</dbReference>
<dbReference type="GO" id="GO:0051117">
    <property type="term" value="F:ATPase binding"/>
    <property type="evidence" value="ECO:0000353"/>
    <property type="project" value="MGI"/>
</dbReference>
<dbReference type="GO" id="GO:0005262">
    <property type="term" value="F:calcium channel activity"/>
    <property type="evidence" value="ECO:0000314"/>
    <property type="project" value="UniProtKB"/>
</dbReference>
<dbReference type="GO" id="GO:0005509">
    <property type="term" value="F:calcium ion binding"/>
    <property type="evidence" value="ECO:0000314"/>
    <property type="project" value="BHF-UCL"/>
</dbReference>
<dbReference type="GO" id="GO:0048763">
    <property type="term" value="F:calcium-induced calcium release activity"/>
    <property type="evidence" value="ECO:0007669"/>
    <property type="project" value="Ensembl"/>
</dbReference>
<dbReference type="GO" id="GO:0015267">
    <property type="term" value="F:channel activity"/>
    <property type="evidence" value="ECO:0000315"/>
    <property type="project" value="MGI"/>
</dbReference>
<dbReference type="GO" id="GO:0043398">
    <property type="term" value="F:HLH domain binding"/>
    <property type="evidence" value="ECO:0007669"/>
    <property type="project" value="Ensembl"/>
</dbReference>
<dbReference type="GO" id="GO:0042802">
    <property type="term" value="F:identical protein binding"/>
    <property type="evidence" value="ECO:0000353"/>
    <property type="project" value="BHF-UCL"/>
</dbReference>
<dbReference type="GO" id="GO:0015271">
    <property type="term" value="F:outward rectifier potassium channel activity"/>
    <property type="evidence" value="ECO:0000315"/>
    <property type="project" value="UniProtKB"/>
</dbReference>
<dbReference type="GO" id="GO:0051219">
    <property type="term" value="F:phosphoprotein binding"/>
    <property type="evidence" value="ECO:0007669"/>
    <property type="project" value="Ensembl"/>
</dbReference>
<dbReference type="GO" id="GO:0005267">
    <property type="term" value="F:potassium channel activity"/>
    <property type="evidence" value="ECO:0000314"/>
    <property type="project" value="UniProtKB"/>
</dbReference>
<dbReference type="GO" id="GO:0042803">
    <property type="term" value="F:protein homodimerization activity"/>
    <property type="evidence" value="ECO:0007669"/>
    <property type="project" value="Ensembl"/>
</dbReference>
<dbReference type="GO" id="GO:0005102">
    <property type="term" value="F:signaling receptor binding"/>
    <property type="evidence" value="ECO:0000353"/>
    <property type="project" value="MGI"/>
</dbReference>
<dbReference type="GO" id="GO:0005272">
    <property type="term" value="F:sodium channel activity"/>
    <property type="evidence" value="ECO:0000314"/>
    <property type="project" value="UniProtKB"/>
</dbReference>
<dbReference type="GO" id="GO:0140416">
    <property type="term" value="F:transcription regulator inhibitor activity"/>
    <property type="evidence" value="ECO:0007669"/>
    <property type="project" value="Ensembl"/>
</dbReference>
<dbReference type="GO" id="GO:0044325">
    <property type="term" value="F:transmembrane transporter binding"/>
    <property type="evidence" value="ECO:0007669"/>
    <property type="project" value="Ensembl"/>
</dbReference>
<dbReference type="GO" id="GO:0005245">
    <property type="term" value="F:voltage-gated calcium channel activity"/>
    <property type="evidence" value="ECO:0007669"/>
    <property type="project" value="Ensembl"/>
</dbReference>
<dbReference type="GO" id="GO:0005248">
    <property type="term" value="F:voltage-gated sodium channel activity"/>
    <property type="evidence" value="ECO:0007669"/>
    <property type="project" value="Ensembl"/>
</dbReference>
<dbReference type="GO" id="GO:0035904">
    <property type="term" value="P:aorta development"/>
    <property type="evidence" value="ECO:0007669"/>
    <property type="project" value="Ensembl"/>
</dbReference>
<dbReference type="GO" id="GO:0001658">
    <property type="term" value="P:branching involved in ureteric bud morphogenesis"/>
    <property type="evidence" value="ECO:0007669"/>
    <property type="project" value="Ensembl"/>
</dbReference>
<dbReference type="GO" id="GO:0070588">
    <property type="term" value="P:calcium ion transmembrane transport"/>
    <property type="evidence" value="ECO:0000315"/>
    <property type="project" value="UniProtKB"/>
</dbReference>
<dbReference type="GO" id="GO:0006816">
    <property type="term" value="P:calcium ion transport"/>
    <property type="evidence" value="ECO:0000314"/>
    <property type="project" value="UniProtKB"/>
</dbReference>
<dbReference type="GO" id="GO:0007166">
    <property type="term" value="P:cell surface receptor signaling pathway"/>
    <property type="evidence" value="ECO:0000250"/>
    <property type="project" value="UniProtKB"/>
</dbReference>
<dbReference type="GO" id="GO:0007259">
    <property type="term" value="P:cell surface receptor signaling pathway via JAK-STAT"/>
    <property type="evidence" value="ECO:0000314"/>
    <property type="project" value="MGI"/>
</dbReference>
<dbReference type="GO" id="GO:0071277">
    <property type="term" value="P:cellular response to calcium ion"/>
    <property type="evidence" value="ECO:0000315"/>
    <property type="project" value="UniProtKB"/>
</dbReference>
<dbReference type="GO" id="GO:0071320">
    <property type="term" value="P:cellular response to cAMP"/>
    <property type="evidence" value="ECO:0007669"/>
    <property type="project" value="Ensembl"/>
</dbReference>
<dbReference type="GO" id="GO:0071498">
    <property type="term" value="P:cellular response to fluid shear stress"/>
    <property type="evidence" value="ECO:0000315"/>
    <property type="project" value="BHF-UCL"/>
</dbReference>
<dbReference type="GO" id="GO:0071464">
    <property type="term" value="P:cellular response to hydrostatic pressure"/>
    <property type="evidence" value="ECO:0007669"/>
    <property type="project" value="Ensembl"/>
</dbReference>
<dbReference type="GO" id="GO:0071470">
    <property type="term" value="P:cellular response to osmotic stress"/>
    <property type="evidence" value="ECO:0007669"/>
    <property type="project" value="Ensembl"/>
</dbReference>
<dbReference type="GO" id="GO:0044782">
    <property type="term" value="P:cilium organization"/>
    <property type="evidence" value="ECO:0000266"/>
    <property type="project" value="MGI"/>
</dbReference>
<dbReference type="GO" id="GO:0050982">
    <property type="term" value="P:detection of mechanical stimulus"/>
    <property type="evidence" value="ECO:0000315"/>
    <property type="project" value="MGI"/>
</dbReference>
<dbReference type="GO" id="GO:0003127">
    <property type="term" value="P:detection of nodal flow"/>
    <property type="evidence" value="ECO:0000315"/>
    <property type="project" value="BHF-UCL"/>
</dbReference>
<dbReference type="GO" id="GO:0007368">
    <property type="term" value="P:determination of left/right symmetry"/>
    <property type="evidence" value="ECO:0000315"/>
    <property type="project" value="MGI"/>
</dbReference>
<dbReference type="GO" id="GO:0071910">
    <property type="term" value="P:determination of liver left/right asymmetry"/>
    <property type="evidence" value="ECO:0007669"/>
    <property type="project" value="Ensembl"/>
</dbReference>
<dbReference type="GO" id="GO:0001892">
    <property type="term" value="P:embryonic placenta development"/>
    <property type="evidence" value="ECO:0000315"/>
    <property type="project" value="BHF-UCL"/>
</dbReference>
<dbReference type="GO" id="GO:0051649">
    <property type="term" value="P:establishment of localization in cell"/>
    <property type="evidence" value="ECO:0000315"/>
    <property type="project" value="MGI"/>
</dbReference>
<dbReference type="GO" id="GO:0007507">
    <property type="term" value="P:heart development"/>
    <property type="evidence" value="ECO:0000315"/>
    <property type="project" value="MGI"/>
</dbReference>
<dbReference type="GO" id="GO:0001947">
    <property type="term" value="P:heart looping"/>
    <property type="evidence" value="ECO:0007669"/>
    <property type="project" value="Ensembl"/>
</dbReference>
<dbReference type="GO" id="GO:0006874">
    <property type="term" value="P:intracellular calcium ion homeostasis"/>
    <property type="evidence" value="ECO:0000315"/>
    <property type="project" value="MGI"/>
</dbReference>
<dbReference type="GO" id="GO:0001822">
    <property type="term" value="P:kidney development"/>
    <property type="evidence" value="ECO:0000315"/>
    <property type="project" value="MGI"/>
</dbReference>
<dbReference type="GO" id="GO:0001889">
    <property type="term" value="P:liver development"/>
    <property type="evidence" value="ECO:0000316"/>
    <property type="project" value="MGI"/>
</dbReference>
<dbReference type="GO" id="GO:0072177">
    <property type="term" value="P:mesonephric duct development"/>
    <property type="evidence" value="ECO:0007669"/>
    <property type="project" value="Ensembl"/>
</dbReference>
<dbReference type="GO" id="GO:0072218">
    <property type="term" value="P:metanephric ascending thin limb development"/>
    <property type="evidence" value="ECO:0007669"/>
    <property type="project" value="Ensembl"/>
</dbReference>
<dbReference type="GO" id="GO:0072214">
    <property type="term" value="P:metanephric cortex development"/>
    <property type="evidence" value="ECO:0007669"/>
    <property type="project" value="Ensembl"/>
</dbReference>
<dbReference type="GO" id="GO:0072219">
    <property type="term" value="P:metanephric cortical collecting duct development"/>
    <property type="evidence" value="ECO:0007669"/>
    <property type="project" value="Ensembl"/>
</dbReference>
<dbReference type="GO" id="GO:0072235">
    <property type="term" value="P:metanephric distal tubule development"/>
    <property type="evidence" value="ECO:0007669"/>
    <property type="project" value="Ensembl"/>
</dbReference>
<dbReference type="GO" id="GO:0072075">
    <property type="term" value="P:metanephric mesenchyme development"/>
    <property type="evidence" value="ECO:0007669"/>
    <property type="project" value="Ensembl"/>
</dbReference>
<dbReference type="GO" id="GO:0035502">
    <property type="term" value="P:metanephric part of ureteric bud development"/>
    <property type="evidence" value="ECO:0007669"/>
    <property type="project" value="Ensembl"/>
</dbReference>
<dbReference type="GO" id="GO:0072284">
    <property type="term" value="P:metanephric S-shaped body morphogenesis"/>
    <property type="evidence" value="ECO:0007669"/>
    <property type="project" value="Ensembl"/>
</dbReference>
<dbReference type="GO" id="GO:0072208">
    <property type="term" value="P:metanephric smooth muscle tissue development"/>
    <property type="evidence" value="ECO:0007669"/>
    <property type="project" value="Ensembl"/>
</dbReference>
<dbReference type="GO" id="GO:2000134">
    <property type="term" value="P:negative regulation of G1/S transition of mitotic cell cycle"/>
    <property type="evidence" value="ECO:0007669"/>
    <property type="project" value="Ensembl"/>
</dbReference>
<dbReference type="GO" id="GO:0021915">
    <property type="term" value="P:neural tube development"/>
    <property type="evidence" value="ECO:0007669"/>
    <property type="project" value="Ensembl"/>
</dbReference>
<dbReference type="GO" id="GO:0060674">
    <property type="term" value="P:placenta blood vessel development"/>
    <property type="evidence" value="ECO:0000315"/>
    <property type="project" value="BHF-UCL"/>
</dbReference>
<dbReference type="GO" id="GO:0010628">
    <property type="term" value="P:positive regulation of gene expression"/>
    <property type="evidence" value="ECO:0000315"/>
    <property type="project" value="UniProtKB"/>
</dbReference>
<dbReference type="GO" id="GO:0045429">
    <property type="term" value="P:positive regulation of nitric oxide biosynthetic process"/>
    <property type="evidence" value="ECO:0000315"/>
    <property type="project" value="BHF-UCL"/>
</dbReference>
<dbReference type="GO" id="GO:1900738">
    <property type="term" value="P:positive regulation of phospholipase C-activating G protein-coupled receptor signaling pathway"/>
    <property type="evidence" value="ECO:0007669"/>
    <property type="project" value="Ensembl"/>
</dbReference>
<dbReference type="GO" id="GO:0045944">
    <property type="term" value="P:positive regulation of transcription by RNA polymerase II"/>
    <property type="evidence" value="ECO:0007669"/>
    <property type="project" value="Ensembl"/>
</dbReference>
<dbReference type="GO" id="GO:0071805">
    <property type="term" value="P:potassium ion transmembrane transport"/>
    <property type="evidence" value="ECO:0000315"/>
    <property type="project" value="UniProtKB"/>
</dbReference>
<dbReference type="GO" id="GO:0006813">
    <property type="term" value="P:potassium ion transport"/>
    <property type="evidence" value="ECO:0000314"/>
    <property type="project" value="UniProtKB"/>
</dbReference>
<dbReference type="GO" id="GO:0051290">
    <property type="term" value="P:protein heterotetramerization"/>
    <property type="evidence" value="ECO:0000250"/>
    <property type="project" value="UniProtKB"/>
</dbReference>
<dbReference type="GO" id="GO:0051289">
    <property type="term" value="P:protein homotetramerization"/>
    <property type="evidence" value="ECO:0007669"/>
    <property type="project" value="Ensembl"/>
</dbReference>
<dbReference type="GO" id="GO:0051262">
    <property type="term" value="P:protein tetramerization"/>
    <property type="evidence" value="ECO:0000250"/>
    <property type="project" value="UniProtKB"/>
</dbReference>
<dbReference type="GO" id="GO:0090279">
    <property type="term" value="P:regulation of calcium ion import"/>
    <property type="evidence" value="ECO:0007669"/>
    <property type="project" value="Ensembl"/>
</dbReference>
<dbReference type="GO" id="GO:0051726">
    <property type="term" value="P:regulation of cell cycle"/>
    <property type="evidence" value="ECO:0000314"/>
    <property type="project" value="MGI"/>
</dbReference>
<dbReference type="GO" id="GO:0042127">
    <property type="term" value="P:regulation of cell population proliferation"/>
    <property type="evidence" value="ECO:0007669"/>
    <property type="project" value="Ensembl"/>
</dbReference>
<dbReference type="GO" id="GO:0051209">
    <property type="term" value="P:release of sequestered calcium ion into cytosol"/>
    <property type="evidence" value="ECO:0000315"/>
    <property type="project" value="BHF-UCL"/>
</dbReference>
<dbReference type="GO" id="GO:0061441">
    <property type="term" value="P:renal artery morphogenesis"/>
    <property type="evidence" value="ECO:0007669"/>
    <property type="project" value="Ensembl"/>
</dbReference>
<dbReference type="GO" id="GO:0061333">
    <property type="term" value="P:renal tubule morphogenesis"/>
    <property type="evidence" value="ECO:0000315"/>
    <property type="project" value="UniProtKB"/>
</dbReference>
<dbReference type="GO" id="GO:0006814">
    <property type="term" value="P:sodium ion transport"/>
    <property type="evidence" value="ECO:0000314"/>
    <property type="project" value="UniProtKB"/>
</dbReference>
<dbReference type="GO" id="GO:0021510">
    <property type="term" value="P:spinal cord development"/>
    <property type="evidence" value="ECO:0007669"/>
    <property type="project" value="Ensembl"/>
</dbReference>
<dbReference type="GO" id="GO:0016055">
    <property type="term" value="P:Wnt signaling pathway"/>
    <property type="evidence" value="ECO:0000266"/>
    <property type="project" value="ComplexPortal"/>
</dbReference>
<dbReference type="FunFam" id="1.20.120.350:FF:000080">
    <property type="entry name" value="Polycystic kidney disease 2"/>
    <property type="match status" value="1"/>
</dbReference>
<dbReference type="FunFam" id="1.10.287.70:FF:000055">
    <property type="entry name" value="Polycystic kidney disease 2-like 1"/>
    <property type="match status" value="1"/>
</dbReference>
<dbReference type="FunFam" id="1.10.238.10:FF:000228">
    <property type="entry name" value="polycystin-2 isoform X1"/>
    <property type="match status" value="1"/>
</dbReference>
<dbReference type="FunFam" id="1.20.5.340:FF:000020">
    <property type="entry name" value="polycystin-2 isoform X1"/>
    <property type="match status" value="1"/>
</dbReference>
<dbReference type="Gene3D" id="1.10.287.70">
    <property type="match status" value="1"/>
</dbReference>
<dbReference type="Gene3D" id="1.20.5.340">
    <property type="match status" value="1"/>
</dbReference>
<dbReference type="Gene3D" id="1.10.238.10">
    <property type="entry name" value="EF-hand"/>
    <property type="match status" value="1"/>
</dbReference>
<dbReference type="Gene3D" id="1.20.120.350">
    <property type="entry name" value="Voltage-gated potassium channels. Chain C"/>
    <property type="match status" value="1"/>
</dbReference>
<dbReference type="InterPro" id="IPR011992">
    <property type="entry name" value="EF-hand-dom_pair"/>
</dbReference>
<dbReference type="InterPro" id="IPR002048">
    <property type="entry name" value="EF_hand_dom"/>
</dbReference>
<dbReference type="InterPro" id="IPR013122">
    <property type="entry name" value="PKD1_2_channel"/>
</dbReference>
<dbReference type="InterPro" id="IPR003915">
    <property type="entry name" value="PKD_2"/>
</dbReference>
<dbReference type="InterPro" id="IPR051223">
    <property type="entry name" value="Polycystin"/>
</dbReference>
<dbReference type="InterPro" id="IPR046791">
    <property type="entry name" value="Polycystin_dom"/>
</dbReference>
<dbReference type="InterPro" id="IPR027359">
    <property type="entry name" value="Volt_channel_dom_sf"/>
</dbReference>
<dbReference type="PANTHER" id="PTHR10877">
    <property type="entry name" value="POLYCYSTIN FAMILY MEMBER"/>
    <property type="match status" value="1"/>
</dbReference>
<dbReference type="PANTHER" id="PTHR10877:SF114">
    <property type="entry name" value="POLYCYSTIN-2"/>
    <property type="match status" value="1"/>
</dbReference>
<dbReference type="Pfam" id="PF18109">
    <property type="entry name" value="Fer4_24"/>
    <property type="match status" value="1"/>
</dbReference>
<dbReference type="Pfam" id="PF08016">
    <property type="entry name" value="PKD_channel"/>
    <property type="match status" value="1"/>
</dbReference>
<dbReference type="Pfam" id="PF20519">
    <property type="entry name" value="Polycystin_dom"/>
    <property type="match status" value="1"/>
</dbReference>
<dbReference type="PRINTS" id="PR01433">
    <property type="entry name" value="POLYCYSTIN2"/>
</dbReference>
<dbReference type="SUPFAM" id="SSF47473">
    <property type="entry name" value="EF-hand"/>
    <property type="match status" value="1"/>
</dbReference>
<dbReference type="SUPFAM" id="SSF81324">
    <property type="entry name" value="Voltage-gated potassium channels"/>
    <property type="match status" value="1"/>
</dbReference>
<dbReference type="PROSITE" id="PS50222">
    <property type="entry name" value="EF_HAND_2"/>
    <property type="match status" value="1"/>
</dbReference>
<protein>
    <recommendedName>
        <fullName>Polycystin-2</fullName>
    </recommendedName>
    <alternativeName>
        <fullName>Polycystic kidney disease 2 protein homolog</fullName>
    </alternativeName>
    <alternativeName>
        <fullName evidence="39">Transient receptor potential cation channel subfamily P member 2</fullName>
    </alternativeName>
</protein>
<comment type="function">
    <text evidence="1 5 11 12 16 18 19 20 22 23 24 25 26 27 28 29 30 31 33">Forms a nonselective cation channel. Can function as a homotetrameric ion channel or can form heteromer with PKD1 (PubMed:12640140, PubMed:25405894, PubMed:27214281, PubMed:27760766, PubMed:29443690). Displays distinct function depending on its subcellular localization and regulation by its binding partners. Functions as a cation channel, with a preference for monovalent cations over divalent cations that allows K(+), Na(+) and Ca(2+) influx, with low selectivity for Ca(2+). Involved in fluid-flow mechanosensation by the primary cilium in renal epithelium (PubMed:12514735, PubMed:12640140, PubMed:18695040, PubMed:27760766, PubMed:29443690, PubMed:31048699). In the endoplasmic reticulum, likely functions as a K(+) channel to facilitate Ca(2+) release (PubMed:35835458). The heterotetrameric PKD1/PKD2 channel has higher Ca(2+) permeability than homomeric PKD2 channel and acts as a primarily Ca(2+)-permeable channel (By similarity). PKD1 and PKD2 may function through a common signaling pathway that is necessary to maintain the normal, differentiated state of renal tubule cells (PubMed:10615132, PubMed:9568711). Interacts with and acts as a regulator of a number of other channels, such as TRPV4, TRPC1, IP3R, RYR2, ultimately further affecting intracellular signaling, to modulate intracellular Ca(2+) signaling. Together with TRPV4, forms mechano- and thermosensitive channels in cilium (PubMed:18695040). In cardiomyocytes, PKD2 modulates Ca(2+) release from stimulated RYR2 receptors through direct association (PubMed:17404231). Also involved in left-right axis specification via its role in sensing nodal flow; forms a complex with PKD1L1 in cilia to facilitate flow detection in left-right patterning (PubMed:21307093, PubMed:22983710). Acts as a regulator of cilium length together with PKD1 (PubMed:20096584). Mediates systemic blood pressure and contributes to the myogenic response in cerebral arteries though vasoconstriction (PubMed:23858011, PubMed:30511640, PubMed:31822608).</text>
</comment>
<comment type="catalytic activity">
    <reaction evidence="12 26 27">
        <text>K(+)(in) = K(+)(out)</text>
        <dbReference type="Rhea" id="RHEA:29463"/>
        <dbReference type="ChEBI" id="CHEBI:29103"/>
    </reaction>
</comment>
<comment type="catalytic activity">
    <reaction evidence="12 26 27">
        <text>Na(+)(in) = Na(+)(out)</text>
        <dbReference type="Rhea" id="RHEA:34963"/>
        <dbReference type="ChEBI" id="CHEBI:29101"/>
    </reaction>
</comment>
<comment type="catalytic activity">
    <reaction evidence="12 26 27 31">
        <text>Ca(2+)(in) = Ca(2+)(out)</text>
        <dbReference type="Rhea" id="RHEA:29671"/>
        <dbReference type="ChEBI" id="CHEBI:29108"/>
    </reaction>
</comment>
<comment type="activity regulation">
    <text evidence="1 26 27 29">Channel activity is regulated by phosphorylation (By similarity). The channel is activated by increased cytoplasmic Ca(2+) (in the uM range) and by membrane depolarization (PubMed:27760766, PubMed:29443690). TMEM120A inhibits the channel activity of PKD2, and mediates mechanosensitivity of the PKD2-TMEM120A channel complex (By similarity). At the endoplasmic reticulum membrane (ER), TMEM33 enhances its channel activity (PubMed:31048699). PKD1/ PKD2 complex on the plasma membrane is activated by PKD1 N-terminus (By similarity).</text>
</comment>
<comment type="subunit">
    <text evidence="1 6 8 13 14 16 17 18 20 21 24 29">Homotetramer (By similarity). Component of the heterotetrameric polycystin channel complex with PKD1; the tetramer contains one PKD1 chain and three PKD2 chains (By similarity). Interaction with PKD1 is required for ciliary localization (PubMed:25405894). Isoform 1 interacts with PKD1 while isoform 3 does not (PubMed:16192288). Interacts with PKD1L1 (PubMed:21307093, PubMed:22983710). Interacts with CD2AP (PubMed:10913159). Interacts with HAX1 (PubMed:10760273). Interacts with NEK8 (PubMed:18235101). Part of a complex containing AKAP5, ADCY5, ADCY6 and PDE4C (PubMed:21670265). Interacts (via C-terminus) with TRPV4 (via C-terminus) (PubMed:18695040). Interacts (via C-terminal acidic region) with PACS1 and PACS2; these interactions retain the protein in the endoplasmic reticulum and prevent trafficking to the cell membrane (PubMed:15692563). Interacts with TMEM33; enhancing its opening at the ER membrane (PubMed:31048699). Interacts with TMEM120A; TMEM120A inhibits PKD2 channel activity through the physical association of PKD2 with TMEM120A (By similarity). Interacts (via N-terminus) with RYR2; regulates RYR2 channel activity (PubMed:17404231).</text>
</comment>
<comment type="interaction">
    <interactant intactId="EBI-9823400">
        <id>O35245</id>
    </interactant>
    <interactant intactId="EBI-9837938">
        <id>E2JF22</id>
        <label>Piezo1</label>
    </interactant>
    <organismsDiffer>false</organismsDiffer>
    <experiments>3</experiments>
</comment>
<comment type="subcellular location">
    <subcellularLocation>
        <location evidence="11 13 18 20 22 24 26 27">Cell projection</location>
        <location evidence="11 13 18 20 22 24 26 27">Cilium membrane</location>
        <topology evidence="1">Multi-pass membrane protein</topology>
    </subcellularLocation>
    <subcellularLocation>
        <location evidence="12 15 25">Cell membrane</location>
        <topology evidence="1">Multi-pass membrane protein</topology>
    </subcellularLocation>
    <subcellularLocation>
        <location evidence="7 33">Basolateral cell membrane</location>
        <topology evidence="1">Multi-pass membrane protein</topology>
    </subcellularLocation>
    <subcellularLocation>
        <location evidence="7 15 33">Cytoplasmic vesicle membrane</location>
    </subcellularLocation>
    <subcellularLocation>
        <location evidence="9 24 38">Endoplasmic reticulum membrane</location>
    </subcellularLocation>
    <subcellularLocation>
        <location evidence="24">Golgi apparatus</location>
    </subcellularLocation>
    <subcellularLocation>
        <location evidence="1">Vesicle</location>
    </subcellularLocation>
    <subcellularLocation>
        <location evidence="1">Secreted</location>
        <location evidence="1">Extracellular exosome</location>
    </subcellularLocation>
    <text evidence="1 7 24 32 33">PKD2 localization to the plasma and ciliary membranes requires PKD1. PKD1:PKD2 interaction is required to reach the Golgi apparatus form endoplasmic reticulum and then traffic to the cilia (PubMed:25405894). Detected on kidney tubule basolateral membranes and basal cytoplasmic vesicles (PubMed:10770959, PubMed:9568711). Retained in the endoplasmic reticulum by interaction with PACS1 and PACS2. Cilium localization requires GANAB (By similarity). Detected on migrasomes and on extracellular exosomes in urine (By similarity). Preferentially localized to the dorsal side of immotile cilia (PubMed:36603091).</text>
</comment>
<comment type="alternative products">
    <event type="alternative splicing"/>
    <isoform>
        <id>O35245-1</id>
        <name>1</name>
        <sequence type="displayed"/>
    </isoform>
    <isoform>
        <id>O35245-2</id>
        <name>2</name>
        <name>delta6</name>
        <sequence type="described" ref="VSP_042485 VSP_042486"/>
    </isoform>
    <isoform>
        <id>O35245-3</id>
        <name>3</name>
        <name>delta7</name>
        <sequence type="described" ref="VSP_042487"/>
    </isoform>
    <isoform>
        <id>O35245-4</id>
        <name>4</name>
        <name>delta9</name>
        <sequence type="described" ref="VSP_042488 VSP_042489"/>
    </isoform>
    <isoform>
        <id>O35245-5</id>
        <name>5</name>
        <name>delta12/13</name>
        <sequence type="described" ref="VSP_042490"/>
    </isoform>
</comment>
<comment type="tissue specificity">
    <text evidence="7 9 14 20 33 34">Detected in kidney epithelium (at protein level) (PubMed:10770959, PubMed:11854751, PubMed:9568711). Highly expressed on basolateral membranes in distal convoluted tubules and medullary thick ascending limbs of Henle (PubMed:9568711). Detected at much lower levels in cortical and medullary collecting tubules, and not detected in the glomerular tuft, in thin limbs of Henle, interstitium and blood vessels (at protein level) (PubMed:9568711). Expressed in mesenchymally derived structures in the developing embryo at day 12.5. Isoform 1 is predominantly expressed in kidney at all developmental stages with high levels also detected in lung. Isoform 3 shows highest expression in brain with lower expression in kidney and lung, low levels in thymus and is hardly detectable in liver.</text>
</comment>
<comment type="developmental stage">
    <text evidence="22">Ubiquitous in embryos at the early somite stage.</text>
</comment>
<comment type="PTM">
    <text evidence="1 9">N-glycosylated (PubMed:11854751). The four subunits in a tetramer probably differ in the extent of glycosylation; simultaneous glycosylation of all experimentally validated sites would probably create steric hindrance (By similarity).</text>
</comment>
<comment type="PTM">
    <text evidence="30">Sumoylated by SUMO1; sumoylation regulates PKD2 membrane recycling and is necessary for intravascular pressure-induced arterial contractility.</text>
</comment>
<comment type="PTM">
    <text evidence="1 15">Phosphorylated (PubMed:16551655). Phosphorylation is important for protein function; a mutant that lacks the N-terminal phosphorylation sites cannot complement a zebrafish pkd2-deficient mutant. PKD-mediated phosphorylation at the C-terminus regulates its function in the release of Ca(2+) stores from the endoplasmic reticulum. Phosphorylation at Ser-810 regulates PKD2 trafficking. Phosphorylation at Ser-72 is required for PKD2 trafficking to or retention at the lateral plasma membrane. Phosphorylation at Ser-799, Ser-810 and Ser-827 regulates PKD2 channel activity (By similarity).</text>
</comment>
<comment type="disruption phenotype">
    <text evidence="5 10 33">Complete embryonic lethality, with most embryos surviving up to about 16.5 dpc (PubMed:10615132, PubMed:12062060, PubMed:9568711). Embryos lacking Pkd2 develop normally up to 13.5 dpc, but after that about half of them display total body edema and focal hemorrhages (PubMed:10615132). Mutant embryos display defects in left-right laterality, including abnormal heart looping (PubMed:12062060). After 13.5 dpc, all embryos display defects in heart development, with defective formation of the interventricular septum (PubMed:10615132, PubMed:12062060). Besides, many display defective formation of the atrial septum and pericardial effusions (PubMed:10615132). After 14.5 dpc, the embryos display progressive cystic dilatation of pancreatic ducts (PubMed:10615132). After 15.5 dpc, they display progressive kidney cyst formation (PubMed:10615132). In contrast, liver development is normal, without any cyst formation (PubMed:10615132). Heterozygous mice with one null allele and one instable allele that leads to somatic loss of Pkd2 expression due to intragenic recombination all display bilateral renal cysts at an age of about 11 weeks (PubMed:9568711). These cysts cover 25-75% of the cut surface area of each kidney (PubMed:9568711). Progressive cyst formation leads eventually to renal failure and shortened lifespan (PubMed:10615132). Besides, these mice all display liver cysts and half of them display also bile duct proliferation (PubMed:9568711). About half of the heterozygous mice with one null allele and one instable allele that leads to somatic loss of Pkd2 expression due to intragenic recombination display visible pancreas cysts at an age of three months (PubMed:10615132). Mice homozygous for an instable allele that leads to somatic loss of Pkd2 expression due to intragenic recombination develop renal cysts that arise from cells that have lost Pkd2 expression (PubMed:9568711). Heterozygous mice that bear one null allele also have a reduced lifespan, but this is not due to kidney failure (PubMed:10615132).</text>
</comment>
<comment type="miscellaneous">
    <molecule>Isoform 5</molecule>
    <text evidence="37">Minor isoform.</text>
</comment>
<comment type="similarity">
    <text evidence="37">Belongs to the polycystin family.</text>
</comment>
<comment type="caution">
    <text evidence="1">A study shown that cation channel activity is activatable by Wnt molecules (By similarity). However, this finding remains debatable because the agonist role of Wnt molecules has not been reproduced by an other study, that show that, when PKD2 is expressed in either with or without PKD1, no significant whole-cell current is activated by Wnt proteins (By similarity).</text>
</comment>
<reference key="1">
    <citation type="journal article" date="1997" name="Genomics">
        <title>Molecular cloning, cDNA sequence analysis, and chromosomal localization of mouse Pkd2.</title>
        <authorList>
            <person name="Wu G.Q."/>
            <person name="Mochizuki T."/>
            <person name="Le T.C."/>
            <person name="Cai Y."/>
            <person name="Hayashi T."/>
            <person name="Reynolds D.M."/>
            <person name="Somlo S."/>
        </authorList>
    </citation>
    <scope>NUCLEOTIDE SEQUENCE [MRNA] (ISOFORM 1)</scope>
</reference>
<reference key="2">
    <citation type="journal article" date="1998" name="Mamm. Genome">
        <title>Characterization of the murine polycystic kidney disease (Pkd2) gene.</title>
        <authorList>
            <person name="Pennekamp P."/>
            <person name="Bogdanova N."/>
            <person name="Wilda M."/>
            <person name="Markoff A."/>
            <person name="Hameister H."/>
            <person name="Horst J."/>
            <person name="Dworniczak B."/>
        </authorList>
    </citation>
    <scope>NUCLEOTIDE SEQUENCE [GENOMIC DNA / MRNA] (ISOFORM 1)</scope>
    <scope>TISSUE SPECIFICITY</scope>
</reference>
<reference key="3">
    <citation type="journal article" date="2005" name="Hum. Mol. Genet.">
        <title>A splice form of polycystin-2, lacking exon 7, does not interact with polycystin-1.</title>
        <authorList>
            <person name="Hackmann K."/>
            <person name="Markoff A."/>
            <person name="Qian F."/>
            <person name="Bogdanova N."/>
            <person name="Germino G.G."/>
            <person name="Pennekamp P."/>
            <person name="Dworniczak B."/>
            <person name="Horst J."/>
            <person name="Gerke V."/>
        </authorList>
    </citation>
    <scope>NUCLEOTIDE SEQUENCE [MRNA] (ISOFORM 3)</scope>
    <scope>ALTERNATIVE SPLICING (ISOFORMS 2; 3; 4 AND 5)</scope>
    <scope>LACK OF INTERACTION OF ISOFORM 3 WITH PKD1</scope>
    <scope>TISSUE SPECIFICITY</scope>
</reference>
<reference key="4">
    <citation type="journal article" date="2005" name="Science">
        <title>The transcriptional landscape of the mammalian genome.</title>
        <authorList>
            <person name="Carninci P."/>
            <person name="Kasukawa T."/>
            <person name="Katayama S."/>
            <person name="Gough J."/>
            <person name="Frith M.C."/>
            <person name="Maeda N."/>
            <person name="Oyama R."/>
            <person name="Ravasi T."/>
            <person name="Lenhard B."/>
            <person name="Wells C."/>
            <person name="Kodzius R."/>
            <person name="Shimokawa K."/>
            <person name="Bajic V.B."/>
            <person name="Brenner S.E."/>
            <person name="Batalov S."/>
            <person name="Forrest A.R."/>
            <person name="Zavolan M."/>
            <person name="Davis M.J."/>
            <person name="Wilming L.G."/>
            <person name="Aidinis V."/>
            <person name="Allen J.E."/>
            <person name="Ambesi-Impiombato A."/>
            <person name="Apweiler R."/>
            <person name="Aturaliya R.N."/>
            <person name="Bailey T.L."/>
            <person name="Bansal M."/>
            <person name="Baxter L."/>
            <person name="Beisel K.W."/>
            <person name="Bersano T."/>
            <person name="Bono H."/>
            <person name="Chalk A.M."/>
            <person name="Chiu K.P."/>
            <person name="Choudhary V."/>
            <person name="Christoffels A."/>
            <person name="Clutterbuck D.R."/>
            <person name="Crowe M.L."/>
            <person name="Dalla E."/>
            <person name="Dalrymple B.P."/>
            <person name="de Bono B."/>
            <person name="Della Gatta G."/>
            <person name="di Bernardo D."/>
            <person name="Down T."/>
            <person name="Engstrom P."/>
            <person name="Fagiolini M."/>
            <person name="Faulkner G."/>
            <person name="Fletcher C.F."/>
            <person name="Fukushima T."/>
            <person name="Furuno M."/>
            <person name="Futaki S."/>
            <person name="Gariboldi M."/>
            <person name="Georgii-Hemming P."/>
            <person name="Gingeras T.R."/>
            <person name="Gojobori T."/>
            <person name="Green R.E."/>
            <person name="Gustincich S."/>
            <person name="Harbers M."/>
            <person name="Hayashi Y."/>
            <person name="Hensch T.K."/>
            <person name="Hirokawa N."/>
            <person name="Hill D."/>
            <person name="Huminiecki L."/>
            <person name="Iacono M."/>
            <person name="Ikeo K."/>
            <person name="Iwama A."/>
            <person name="Ishikawa T."/>
            <person name="Jakt M."/>
            <person name="Kanapin A."/>
            <person name="Katoh M."/>
            <person name="Kawasawa Y."/>
            <person name="Kelso J."/>
            <person name="Kitamura H."/>
            <person name="Kitano H."/>
            <person name="Kollias G."/>
            <person name="Krishnan S.P."/>
            <person name="Kruger A."/>
            <person name="Kummerfeld S.K."/>
            <person name="Kurochkin I.V."/>
            <person name="Lareau L.F."/>
            <person name="Lazarevic D."/>
            <person name="Lipovich L."/>
            <person name="Liu J."/>
            <person name="Liuni S."/>
            <person name="McWilliam S."/>
            <person name="Madan Babu M."/>
            <person name="Madera M."/>
            <person name="Marchionni L."/>
            <person name="Matsuda H."/>
            <person name="Matsuzawa S."/>
            <person name="Miki H."/>
            <person name="Mignone F."/>
            <person name="Miyake S."/>
            <person name="Morris K."/>
            <person name="Mottagui-Tabar S."/>
            <person name="Mulder N."/>
            <person name="Nakano N."/>
            <person name="Nakauchi H."/>
            <person name="Ng P."/>
            <person name="Nilsson R."/>
            <person name="Nishiguchi S."/>
            <person name="Nishikawa S."/>
            <person name="Nori F."/>
            <person name="Ohara O."/>
            <person name="Okazaki Y."/>
            <person name="Orlando V."/>
            <person name="Pang K.C."/>
            <person name="Pavan W.J."/>
            <person name="Pavesi G."/>
            <person name="Pesole G."/>
            <person name="Petrovsky N."/>
            <person name="Piazza S."/>
            <person name="Reed J."/>
            <person name="Reid J.F."/>
            <person name="Ring B.Z."/>
            <person name="Ringwald M."/>
            <person name="Rost B."/>
            <person name="Ruan Y."/>
            <person name="Salzberg S.L."/>
            <person name="Sandelin A."/>
            <person name="Schneider C."/>
            <person name="Schoenbach C."/>
            <person name="Sekiguchi K."/>
            <person name="Semple C.A."/>
            <person name="Seno S."/>
            <person name="Sessa L."/>
            <person name="Sheng Y."/>
            <person name="Shibata Y."/>
            <person name="Shimada H."/>
            <person name="Shimada K."/>
            <person name="Silva D."/>
            <person name="Sinclair B."/>
            <person name="Sperling S."/>
            <person name="Stupka E."/>
            <person name="Sugiura K."/>
            <person name="Sultana R."/>
            <person name="Takenaka Y."/>
            <person name="Taki K."/>
            <person name="Tammoja K."/>
            <person name="Tan S.L."/>
            <person name="Tang S."/>
            <person name="Taylor M.S."/>
            <person name="Tegner J."/>
            <person name="Teichmann S.A."/>
            <person name="Ueda H.R."/>
            <person name="van Nimwegen E."/>
            <person name="Verardo R."/>
            <person name="Wei C.L."/>
            <person name="Yagi K."/>
            <person name="Yamanishi H."/>
            <person name="Zabarovsky E."/>
            <person name="Zhu S."/>
            <person name="Zimmer A."/>
            <person name="Hide W."/>
            <person name="Bult C."/>
            <person name="Grimmond S.M."/>
            <person name="Teasdale R.D."/>
            <person name="Liu E.T."/>
            <person name="Brusic V."/>
            <person name="Quackenbush J."/>
            <person name="Wahlestedt C."/>
            <person name="Mattick J.S."/>
            <person name="Hume D.A."/>
            <person name="Kai C."/>
            <person name="Sasaki D."/>
            <person name="Tomaru Y."/>
            <person name="Fukuda S."/>
            <person name="Kanamori-Katayama M."/>
            <person name="Suzuki M."/>
            <person name="Aoki J."/>
            <person name="Arakawa T."/>
            <person name="Iida J."/>
            <person name="Imamura K."/>
            <person name="Itoh M."/>
            <person name="Kato T."/>
            <person name="Kawaji H."/>
            <person name="Kawagashira N."/>
            <person name="Kawashima T."/>
            <person name="Kojima M."/>
            <person name="Kondo S."/>
            <person name="Konno H."/>
            <person name="Nakano K."/>
            <person name="Ninomiya N."/>
            <person name="Nishio T."/>
            <person name="Okada M."/>
            <person name="Plessy C."/>
            <person name="Shibata K."/>
            <person name="Shiraki T."/>
            <person name="Suzuki S."/>
            <person name="Tagami M."/>
            <person name="Waki K."/>
            <person name="Watahiki A."/>
            <person name="Okamura-Oho Y."/>
            <person name="Suzuki H."/>
            <person name="Kawai J."/>
            <person name="Hayashizaki Y."/>
        </authorList>
    </citation>
    <scope>NUCLEOTIDE SEQUENCE [LARGE SCALE MRNA] (ISOFORM 1)</scope>
    <source>
        <strain>C57BL/6J</strain>
        <tissue>Eye</tissue>
    </source>
</reference>
<reference key="5">
    <citation type="journal article" date="2009" name="PLoS Biol.">
        <title>Lineage-specific biology revealed by a finished genome assembly of the mouse.</title>
        <authorList>
            <person name="Church D.M."/>
            <person name="Goodstadt L."/>
            <person name="Hillier L.W."/>
            <person name="Zody M.C."/>
            <person name="Goldstein S."/>
            <person name="She X."/>
            <person name="Bult C.J."/>
            <person name="Agarwala R."/>
            <person name="Cherry J.L."/>
            <person name="DiCuccio M."/>
            <person name="Hlavina W."/>
            <person name="Kapustin Y."/>
            <person name="Meric P."/>
            <person name="Maglott D."/>
            <person name="Birtle Z."/>
            <person name="Marques A.C."/>
            <person name="Graves T."/>
            <person name="Zhou S."/>
            <person name="Teague B."/>
            <person name="Potamousis K."/>
            <person name="Churas C."/>
            <person name="Place M."/>
            <person name="Herschleb J."/>
            <person name="Runnheim R."/>
            <person name="Forrest D."/>
            <person name="Amos-Landgraf J."/>
            <person name="Schwartz D.C."/>
            <person name="Cheng Z."/>
            <person name="Lindblad-Toh K."/>
            <person name="Eichler E.E."/>
            <person name="Ponting C.P."/>
        </authorList>
    </citation>
    <scope>NUCLEOTIDE SEQUENCE [LARGE SCALE GENOMIC DNA]</scope>
    <source>
        <strain>C57BL/6J</strain>
    </source>
</reference>
<reference key="6">
    <citation type="journal article" date="2000" name="Genomics">
        <title>Cloning and characterization of the murine pkd2 promoter.</title>
        <authorList>
            <person name="Park J.H."/>
            <person name="Li L."/>
            <person name="Cai Y."/>
            <person name="Hayashi T."/>
            <person name="Dong F."/>
            <person name="Maeda Y."/>
            <person name="Rubin C."/>
            <person name="Somlo S."/>
            <person name="Wu G."/>
        </authorList>
    </citation>
    <scope>NUCLEOTIDE SEQUENCE [MRNA] OF 1-95</scope>
    <source>
        <strain>129/Ola</strain>
    </source>
</reference>
<reference key="7">
    <citation type="journal article" date="1998" name="Cell">
        <title>Somatic inactivation of Pkd2 results in polycystic kidney disease.</title>
        <authorList>
            <person name="Wu G."/>
            <person name="D'Agati V."/>
            <person name="Cai Y."/>
            <person name="Markowitz G."/>
            <person name="Park J.H."/>
            <person name="Reynolds D.M."/>
            <person name="Maeda Y."/>
            <person name="Le T.C."/>
            <person name="Hou H. Jr."/>
            <person name="Kucherlapati R."/>
            <person name="Edelmann W."/>
            <person name="Somlo S."/>
        </authorList>
    </citation>
    <scope>SUBCELLULAR LOCATION</scope>
    <scope>TISSUE SPECIFICITY</scope>
    <scope>DISRUPTION PHENOTYPE</scope>
    <scope>FUNCTION</scope>
</reference>
<reference key="8">
    <citation type="journal article" date="2000" name="J. Am. Soc. Nephrol.">
        <title>Cellular and subcellular distribution of polycystin-2, the protein product of the PKD2 gene.</title>
        <authorList>
            <person name="Foggensteiner L."/>
            <person name="Bevan A.P."/>
            <person name="Thomas R."/>
            <person name="Coleman N."/>
            <person name="Boulter C."/>
            <person name="Bradley J."/>
            <person name="Ibraghimov-Beskrovnaya O."/>
            <person name="Klinger K."/>
            <person name="Sandford R."/>
        </authorList>
    </citation>
    <scope>TISSUE SPECIFICITY</scope>
    <scope>SUBCELLULAR LOCATION</scope>
</reference>
<reference key="9">
    <citation type="journal article" date="2000" name="J. Biol. Chem.">
        <title>In vivo interaction of the adapter protein CD2-associated protein with the type 2 polycystic kidney disease protein, polycystin-2.</title>
        <authorList>
            <person name="Lehtonen S."/>
            <person name="Ora A."/>
            <person name="Olkkonen V.M."/>
            <person name="Geng L."/>
            <person name="Zerial M."/>
            <person name="Somlo S."/>
            <person name="Lehtonen E."/>
        </authorList>
    </citation>
    <scope>INTERACTION WITH CD2AP</scope>
    <scope>SUBCELLULAR LOCATION</scope>
</reference>
<reference key="10">
    <citation type="journal article" date="2000" name="Nat. Genet.">
        <title>Cardiac defects and renal failure in mice with targeted mutations in Pkd2.</title>
        <authorList>
            <person name="Wu G."/>
            <person name="Markowitz G.S."/>
            <person name="Li L."/>
            <person name="D'Agati V.D."/>
            <person name="Factor S.M."/>
            <person name="Geng L."/>
            <person name="Tibara S."/>
            <person name="Tuchman J."/>
            <person name="Cai Y."/>
            <person name="Park J.H."/>
            <person name="van Adelsberg J."/>
            <person name="Hou H. Jr."/>
            <person name="Kucherlapati R."/>
            <person name="Edelmann W."/>
            <person name="Somlo S."/>
        </authorList>
    </citation>
    <scope>DISRUPTION PHENOTYPE</scope>
    <scope>FUNCTION</scope>
</reference>
<reference key="11">
    <citation type="journal article" date="2000" name="Proc. Natl. Acad. Sci. U.S.A.">
        <title>The polycystic kidney disease protein PKD2 interacts with Hax-1, a protein associated with the actin cytoskeleton.</title>
        <authorList>
            <person name="Gallagher A.R."/>
            <person name="Cedzich A."/>
            <person name="Gretz N."/>
            <person name="Somlo S."/>
            <person name="Witzgall R."/>
        </authorList>
    </citation>
    <scope>INTERACTION WITH HAX1</scope>
</reference>
<reference key="12">
    <citation type="journal article" date="2002" name="Curr. Biol.">
        <title>The ion channel polycystin-2 is required for left-right axis determination in mice.</title>
        <authorList>
            <person name="Pennekamp P."/>
            <person name="Karcher C."/>
            <person name="Fischer A."/>
            <person name="Schweickert A."/>
            <person name="Skryabin B."/>
            <person name="Horst J."/>
            <person name="Blum M."/>
            <person name="Dworniczak B."/>
        </authorList>
    </citation>
    <scope>DISRUPTION PHENOTYPE</scope>
    <scope>FUNCTION</scope>
</reference>
<reference key="13">
    <citation type="journal article" date="2002" name="Nat. Cell Biol.">
        <title>Polycystin-2 is an intracellular calcium release channel.</title>
        <authorList>
            <person name="Koulen P."/>
            <person name="Cai Y."/>
            <person name="Geng L."/>
            <person name="Maeda Y."/>
            <person name="Nishimura S."/>
            <person name="Witzgall R."/>
            <person name="Ehrlich B.E."/>
            <person name="Somlo S."/>
        </authorList>
    </citation>
    <scope>SUBCELLULAR LOCATION</scope>
    <scope>TISSUE SPECIFICITY</scope>
    <scope>GLYCOSYLATION</scope>
</reference>
<reference key="14">
    <citation type="journal article" date="2003" name="Mol. Cell. Biol.">
        <title>Native polycystin 2 functions as a plasma membrane Ca2+-permeable cation channel in renal epithelia.</title>
        <authorList>
            <person name="Luo Y."/>
            <person name="Vassilev P.M."/>
            <person name="Li X."/>
            <person name="Kawanabe Y."/>
            <person name="Zhou J."/>
        </authorList>
    </citation>
    <scope>FUNCTION</scope>
    <scope>TRANSPORTER ACTIVITY</scope>
    <scope>SUBCELLULAR LOCATION</scope>
</reference>
<reference key="15">
    <citation type="journal article" date="2003" name="Nat. Genet.">
        <title>Polycystins 1 and 2 mediate mechanosensation in the primary cilium of kidney cells.</title>
        <authorList>
            <person name="Nauli S.M."/>
            <person name="Alenghat F.J."/>
            <person name="Luo Y."/>
            <person name="Williams E."/>
            <person name="Vassilev P."/>
            <person name="Li X."/>
            <person name="Elia A.E."/>
            <person name="Lu W."/>
            <person name="Brown E.M."/>
            <person name="Quinn S.J."/>
            <person name="Ingber D.E."/>
            <person name="Zhou J."/>
        </authorList>
    </citation>
    <scope>FUNCTION</scope>
    <scope>SUBCELLULAR LOCATION</scope>
</reference>
<reference key="16">
    <citation type="journal article" date="2005" name="EMBO J.">
        <title>Trafficking of TRPP2 by PACS proteins represents a novel mechanism of ion channel regulation.</title>
        <authorList>
            <person name="Koettgen M."/>
            <person name="Benzing T."/>
            <person name="Simmen T."/>
            <person name="Tauber R."/>
            <person name="Buchholz B."/>
            <person name="Feliciangeli S."/>
            <person name="Huber T.B."/>
            <person name="Schermer B."/>
            <person name="Kramer-Zucker A."/>
            <person name="Hoepker K."/>
            <person name="Simmen K.C."/>
            <person name="Tschucke C.C."/>
            <person name="Sandford R."/>
            <person name="Kim E."/>
            <person name="Thomas G."/>
            <person name="Walz G."/>
        </authorList>
    </citation>
    <scope>INTERACTION WITH PACS1</scope>
</reference>
<reference key="17">
    <citation type="journal article" date="2006" name="Hum. Mol. Genet.">
        <title>Identification of an N-terminal glycogen synthase kinase 3 phosphorylation site which regulates the functional localization of polycystin-2 in vivo and in vitro.</title>
        <authorList>
            <person name="Streets A.J."/>
            <person name="Moon D.J."/>
            <person name="Kane M.E."/>
            <person name="Obara T."/>
            <person name="Ong A.C."/>
        </authorList>
    </citation>
    <scope>PHOSPHORYLATION</scope>
    <scope>SUBCELLULAR LOCATION</scope>
</reference>
<reference key="18">
    <citation type="journal article" date="2007" name="Proc. Natl. Acad. Sci. U.S.A.">
        <title>Regulation of ryanodine receptor-dependent calcium signaling by polycystin-2.</title>
        <authorList>
            <person name="Anyatonwu G.I."/>
            <person name="Estrada M."/>
            <person name="Tian X."/>
            <person name="Somlo S."/>
            <person name="Ehrlich B.E."/>
        </authorList>
    </citation>
    <scope>FUNCTION</scope>
    <scope>INTERACTION WITH RYR2</scope>
</reference>
<reference key="19">
    <citation type="journal article" date="2008" name="J. Am. Soc. Nephrol.">
        <title>Nek8 regulates the expression and localization of polycystin-1 and polycystin-2.</title>
        <authorList>
            <person name="Sohara E."/>
            <person name="Luo Y."/>
            <person name="Zhang J."/>
            <person name="Manning D.K."/>
            <person name="Beier D.R."/>
            <person name="Zhou J."/>
        </authorList>
    </citation>
    <scope>INTERACTION WITH NEK8</scope>
</reference>
<reference key="20">
    <citation type="journal article" date="2008" name="J. Cell Biol.">
        <title>TRPP2 and TRPV4 form a polymodal sensory channel complex.</title>
        <authorList>
            <person name="Kottgen M."/>
            <person name="Buchholz B."/>
            <person name="Garcia-Gonzalez M.A."/>
            <person name="Kotsis F."/>
            <person name="Fu X."/>
            <person name="Doerken M."/>
            <person name="Boehlke C."/>
            <person name="Steffl D."/>
            <person name="Tauber R."/>
            <person name="Wegierski T."/>
            <person name="Nitschke R."/>
            <person name="Suzuki M."/>
            <person name="Kramer-Zucker A."/>
            <person name="Germino G.G."/>
            <person name="Watnick T."/>
            <person name="Prenen J."/>
            <person name="Nilius B."/>
            <person name="Kuehn E.W."/>
            <person name="Walz G."/>
        </authorList>
    </citation>
    <scope>FUNCTION</scope>
    <scope>INTERACTION WITH TRPV4</scope>
    <scope>SUBCELLULAR LOCATION</scope>
</reference>
<reference key="21">
    <citation type="journal article" date="2010" name="Cell">
        <title>A tissue-specific atlas of mouse protein phosphorylation and expression.</title>
        <authorList>
            <person name="Huttlin E.L."/>
            <person name="Jedrychowski M.P."/>
            <person name="Elias J.E."/>
            <person name="Goswami T."/>
            <person name="Rad R."/>
            <person name="Beausoleil S.A."/>
            <person name="Villen J."/>
            <person name="Haas W."/>
            <person name="Sowa M.E."/>
            <person name="Gygi S.P."/>
        </authorList>
    </citation>
    <scope>PHOSPHORYLATION [LARGE SCALE ANALYSIS] AT SER-806; SER-810 AND SER-827</scope>
    <scope>IDENTIFICATION BY MASS SPECTROMETRY [LARGE SCALE ANALYSIS]</scope>
    <source>
        <tissue>Brown adipose tissue</tissue>
        <tissue>Kidney</tissue>
        <tissue>Lung</tissue>
        <tissue>Pancreas</tissue>
        <tissue>Testis</tissue>
    </source>
</reference>
<reference key="22">
    <citation type="journal article" date="2010" name="Curr. Biol.">
        <title>Identification of signaling pathways regulating primary cilium length and flow-mediated adaptation.</title>
        <authorList>
            <person name="Besschetnova T.Y."/>
            <person name="Kolpakova-Hart E."/>
            <person name="Guan Y."/>
            <person name="Zhou J."/>
            <person name="Olsen B.R."/>
            <person name="Shah J.V."/>
        </authorList>
    </citation>
    <scope>FUNCTION AS REGULATOR OF CILIUM LENGTH</scope>
</reference>
<reference key="23">
    <citation type="journal article" date="2011" name="Proc. Natl. Acad. Sci. U.S.A.">
        <title>Polycystin-2 and phosphodiesterase 4C are components of a ciliary A-kinase anchoring protein complex that is disrupted in cystic kidney diseases.</title>
        <authorList>
            <person name="Choi Y.H."/>
            <person name="Suzuki A."/>
            <person name="Hajarnis S."/>
            <person name="Ma Z."/>
            <person name="Chapin H.C."/>
            <person name="Caplan M.J."/>
            <person name="Pontoglio M."/>
            <person name="Somlo S."/>
            <person name="Igarashi P."/>
        </authorList>
    </citation>
    <scope>INTERACTION WITH AKAP5; ADCY5; ADCY6 AND PDE4C</scope>
</reference>
<reference key="24">
    <citation type="journal article" date="2011" name="Development">
        <title>Pkd1l1 establishes left-right asymmetry and physically interacts with Pkd2.</title>
        <authorList>
            <person name="Field S."/>
            <person name="Riley K.L."/>
            <person name="Grimes D.T."/>
            <person name="Hilton H."/>
            <person name="Simon M."/>
            <person name="Powles-Glover N."/>
            <person name="Siggers P."/>
            <person name="Bogani D."/>
            <person name="Greenfield A."/>
            <person name="Norris D.P."/>
        </authorList>
    </citation>
    <scope>FUNCTION</scope>
    <scope>SUBCELLULAR LOCATION</scope>
    <scope>INTERACTION WITH PKD1L1</scope>
    <scope>MUTAGENESIS OF GLU-442</scope>
    <scope>TISSUE SPECIFICITY</scope>
</reference>
<reference key="25">
    <citation type="journal article" date="2012" name="Science">
        <title>Cilia at the node of mouse embryos sense fluid flow for left-right determination via Pkd2.</title>
        <authorList>
            <person name="Yoshiba S."/>
            <person name="Shiratori H."/>
            <person name="Kuo I.Y."/>
            <person name="Kawasumi A."/>
            <person name="Shinohara K."/>
            <person name="Nonaka S."/>
            <person name="Asai Y."/>
            <person name="Sasaki G."/>
            <person name="Belo J.A."/>
            <person name="Sasaki H."/>
            <person name="Nakai J."/>
            <person name="Dworniczak B."/>
            <person name="Ehrlich B.E."/>
            <person name="Pennekamp P."/>
            <person name="Hamada H."/>
        </authorList>
    </citation>
    <scope>FUNCTION</scope>
    <scope>SUBCELLULAR LOCATION</scope>
    <scope>INTERACTION WITH PKD1L1</scope>
    <scope>MUTAGENESIS OF ARG-6; GLU-442; ASP-509 AND 819-GLY--ALA-966</scope>
    <scope>DEVELOPMENTAL STAGE</scope>
</reference>
<reference key="26">
    <citation type="journal article" date="2013" name="J. Physiol. (Lond.)">
        <title>Smooth muscle cell transient receptor potential polycystin-2 (TRPP2) channels contribute to the myogenic response in cerebral arteries.</title>
        <authorList>
            <person name="Narayanan D."/>
            <person name="Bulley S."/>
            <person name="Leo M.D."/>
            <person name="Burris S.K."/>
            <person name="Gabrick K.S."/>
            <person name="Boop F.A."/>
            <person name="Jaggar J.H."/>
        </authorList>
    </citation>
    <scope>FUNCTION</scope>
</reference>
<reference key="27">
    <citation type="journal article" date="2014" name="Mol. Cell. Proteomics">
        <title>Immunoaffinity enrichment and mass spectrometry analysis of protein methylation.</title>
        <authorList>
            <person name="Guo A."/>
            <person name="Gu H."/>
            <person name="Zhou J."/>
            <person name="Mulhern D."/>
            <person name="Wang Y."/>
            <person name="Lee K.A."/>
            <person name="Yang V."/>
            <person name="Aguiar M."/>
            <person name="Kornhauser J."/>
            <person name="Jia X."/>
            <person name="Ren J."/>
            <person name="Beausoleil S.A."/>
            <person name="Silva J.C."/>
            <person name="Vemulapalli V."/>
            <person name="Bedford M.T."/>
            <person name="Comb M.J."/>
        </authorList>
    </citation>
    <scope>METHYLATION [LARGE SCALE ANALYSIS] AT ARG-135</scope>
    <scope>IDENTIFICATION BY MASS SPECTROMETRY [LARGE SCALE ANALYSIS]</scope>
    <source>
        <tissue>Embryo</tissue>
    </source>
</reference>
<reference key="28">
    <citation type="journal article" date="2014" name="Nat. Commun.">
        <title>Ciliary membrane proteins traffic through the Golgi via a Rabep1/GGA1/Arl3-dependent mechanism.</title>
        <authorList>
            <person name="Kim H."/>
            <person name="Xu H."/>
            <person name="Yao Q."/>
            <person name="Li W."/>
            <person name="Huang Q."/>
            <person name="Outeda P."/>
            <person name="Cebotaru V."/>
            <person name="Chiaravalli M."/>
            <person name="Boletta A."/>
            <person name="Piontek K."/>
            <person name="Germino G.G."/>
            <person name="Weinman E.J."/>
            <person name="Watnick T."/>
            <person name="Qian F."/>
        </authorList>
    </citation>
    <scope>FUNCTION</scope>
    <scope>SUBCELLULAR LOCATION</scope>
    <scope>INTERACTION WITH PKD1</scope>
</reference>
<reference key="29">
    <citation type="journal article" date="2016" name="Nat. Cell Biol.">
        <title>The polycystin complex mediates Wnt/Ca(2+) signalling.</title>
        <authorList>
            <person name="Kim S."/>
            <person name="Nie H."/>
            <person name="Nesin V."/>
            <person name="Tran U."/>
            <person name="Outeda P."/>
            <person name="Bai C.X."/>
            <person name="Keeling J."/>
            <person name="Maskey D."/>
            <person name="Watnick T."/>
            <person name="Wessely O."/>
            <person name="Tsiokas L."/>
        </authorList>
    </citation>
    <scope>FUNCTION</scope>
    <scope>SUBCELLULAR LOCATION</scope>
</reference>
<reference key="30">
    <citation type="journal article" date="2017" name="Am. J. Physiol.">
        <title>The native TRPP2-dependent channel of murine renal primary cilia.</title>
        <authorList>
            <person name="Kleene S.J."/>
            <person name="Kleene N.K."/>
        </authorList>
    </citation>
    <scope>FUNCTION</scope>
    <scope>TRANSPORTER ACTIVITY</scope>
    <scope>SUBCELLULAR LOCATION</scope>
    <scope>ACTIVITY REGULATION</scope>
</reference>
<reference key="31">
    <citation type="journal article" date="2018" name="Elife">
        <title>Arterial smooth muscle cell PKD2 (TRPP1) channels regulate systemic blood pressure.</title>
        <authorList>
            <person name="Bulley S."/>
            <person name="Fernandez-Pena C."/>
            <person name="Hasan R."/>
            <person name="Leo M.D."/>
            <person name="Muralidharan P."/>
            <person name="Mackay C.E."/>
            <person name="Evanson K.W."/>
            <person name="Moreira-Junior L."/>
            <person name="Mata-Daboin A."/>
            <person name="Burris S.K."/>
            <person name="Wang Q."/>
            <person name="Kuruvilla K.P."/>
            <person name="Jaggar J.H."/>
        </authorList>
    </citation>
    <scope>FUNCTION</scope>
</reference>
<reference key="32">
    <citation type="journal article" date="2018" name="Elife">
        <title>Polycystin-2 is an essential ion channel subunit in the primary cilium of the renal collecting duct epithelium.</title>
        <authorList>
            <person name="Liu X."/>
            <person name="Vien T."/>
            <person name="Duan J."/>
            <person name="Sheu S.H."/>
            <person name="DeCaen P.G."/>
            <person name="Clapham D.E."/>
        </authorList>
    </citation>
    <scope>FUNCTION</scope>
    <scope>TRANSPORTER ACTIVITY</scope>
    <scope>ACTIVITY REGULATION</scope>
    <scope>SUBCELLULAR LOCATION</scope>
</reference>
<reference key="33">
    <citation type="journal article" date="2019" name="Nat. Commun.">
        <title>TMEM33 regulates intracellular calcium homeostasis in renal tubular epithelial cells.</title>
        <authorList>
            <person name="Arhatte M."/>
            <person name="Gunaratne G.S."/>
            <person name="El Boustany C."/>
            <person name="Kuo I.Y."/>
            <person name="Moro C."/>
            <person name="Duprat F."/>
            <person name="Plaisant M."/>
            <person name="Duval H."/>
            <person name="Li D."/>
            <person name="Picard N."/>
            <person name="Couvreux A."/>
            <person name="Duranton C."/>
            <person name="Rubera I."/>
            <person name="Pagnotta S."/>
            <person name="Lacas-Gervais S."/>
            <person name="Ehrlich B.E."/>
            <person name="Marchant J.S."/>
            <person name="Savage A.M."/>
            <person name="van Eeden F.J.M."/>
            <person name="Wilkinson R.N."/>
            <person name="Demolombe S."/>
            <person name="Honore E."/>
            <person name="Patel A."/>
        </authorList>
    </citation>
    <scope>FUNCTION</scope>
    <scope>INTERACTION WITH TMEM33</scope>
    <scope>ACTIVITY REGULATION</scope>
</reference>
<reference key="34">
    <citation type="journal article" date="2019" name="Proc. Natl. Acad. Sci. U.S.A.">
        <title>SUMO1 modification of PKD2 channels regulates arterial contractility.</title>
        <authorList>
            <person name="Hasan R."/>
            <person name="Leo M.D."/>
            <person name="Muralidharan P."/>
            <person name="Mata-Daboin A."/>
            <person name="Yin W."/>
            <person name="Bulley S."/>
            <person name="Fernandez-Pena C."/>
            <person name="MacKay C.E."/>
            <person name="Jaggar J.H."/>
        </authorList>
    </citation>
    <scope>SUMOYLATION</scope>
    <scope>FUNCTION</scope>
</reference>
<reference key="35">
    <citation type="journal article" date="2022" name="J. Am. Soc. Nephrol.">
        <title>Channel Function of Polycystin-2 in the Endoplasmic Reticulum Protects against Autosomal Dominant Polycystic Kidney Disease.</title>
        <authorList>
            <person name="Padhy B."/>
            <person name="Xie J."/>
            <person name="Wang R."/>
            <person name="Lin F."/>
            <person name="Huang C.L."/>
        </authorList>
    </citation>
    <scope>FUNCTION</scope>
    <scope>TRANSPORTER ACTIVITY</scope>
</reference>
<reference key="36">
    <citation type="journal article" date="2023" name="Science">
        <title>Immotile cilia mechanically sense the direction of fluid flow for left-right determination.</title>
        <authorList>
            <person name="Katoh T.A."/>
            <person name="Omori T."/>
            <person name="Mizuno K."/>
            <person name="Sai X."/>
            <person name="Minegishi K."/>
            <person name="Ikawa Y."/>
            <person name="Nishimura H."/>
            <person name="Itabashi T."/>
            <person name="Kajikawa E."/>
            <person name="Hiver S."/>
            <person name="Iwane A.H."/>
            <person name="Ishikawa T."/>
            <person name="Okada Y."/>
            <person name="Nishizaka T."/>
            <person name="Hamada H."/>
        </authorList>
    </citation>
    <scope>SUBCELLULAR LOCATION</scope>
</reference>
<sequence length="966" mass="108982">MVNSRRVQPQPPGDAGRSPAPRASGPGRLVAGGAGLAVPGGLGEQRGLEIEMERIRQAAARDPPAGASASPSPPLSSCSRQAWSRDNPGFEAEEDDDDDEVEGEEGGMVVEMDVEWRPGSRRSASSSAVSSVGARGRGLGSYRGAAHLSGRRRRLEDQGAQCPSPAGGGDPLHRHLPLEGQPPRVAWAERLVRGLRGLWGTRLMEESNANREKYLKSVLRELVTYLFFLVVLCILTYGMMSSNVYYYTRTLSQLFIDTPVSKTEKTNFKTLSSMEDFWKFTEGSFLDGLYWKAQTSNHTQADNRSFIFYENLLLGVPRLRQLRVRNGSCSIPQDLRDEIKECYDVYSVSSEDRAPFGPRNGTAWMYTSEKELNGSSHWGIIASYSGAGYYLDLSRTREETAAQLAGLRRNFWLDRGTRAAFIDFSVYNANINLFCVVRLLAEFPATGGVVPSWQFQPVKLIRYVTAFDFFLAACEIIFCFFIIYYVVEEILEIRIHRLSYFRSFWNCLDVVIVVLSVVAMVINIYRMSNAEGLLQFLEDQNSFPNFEHVAYWQIQFNNISAVMVFLVWIKLFKFINFNRTMSQLSTTMSRCAKDLFGFTIMFSIIFLAYAQLAYLVFGTQVDDFSTFQECIFTQFRIILGDINFAEIEEANRVLGPLYFTTFVFFMFFILLNMFLAIINDSYSEVKSDLAQQKAEMELSDLIRKGCQKALVKLKLKRNTVDAISESLRQGGGKLNFDELRQDLKGKGHTDAEIEAIFTKYDQDGDQELTEREHQQMRDDLEKEREDLDLEHSSLPRPMSSRSFPRSLDDSEEEDDEDSGHSSRRRGSISSGVSYEEFQVLVRRVDRMEHSIGSIVSKIDAVIVKLEIMERAKLKRREVLGRLLDGVAEDARLGRDSEIHREQMERLVREELERWESDDAASQTGHGVSTQVGLGGQPHPRNPRPPSSQSAEGLEGGGGNGSANVHA</sequence>
<keyword id="KW-0025">Alternative splicing</keyword>
<keyword id="KW-0106">Calcium</keyword>
<keyword id="KW-0107">Calcium channel</keyword>
<keyword id="KW-0109">Calcium transport</keyword>
<keyword id="KW-1003">Cell membrane</keyword>
<keyword id="KW-0966">Cell projection</keyword>
<keyword id="KW-0969">Cilium</keyword>
<keyword id="KW-0175">Coiled coil</keyword>
<keyword id="KW-0968">Cytoplasmic vesicle</keyword>
<keyword id="KW-1015">Disulfide bond</keyword>
<keyword id="KW-0256">Endoplasmic reticulum</keyword>
<keyword id="KW-0325">Glycoprotein</keyword>
<keyword id="KW-0333">Golgi apparatus</keyword>
<keyword id="KW-0407">Ion channel</keyword>
<keyword id="KW-0406">Ion transport</keyword>
<keyword id="KW-0472">Membrane</keyword>
<keyword id="KW-0479">Metal-binding</keyword>
<keyword id="KW-0488">Methylation</keyword>
<keyword id="KW-0597">Phosphoprotein</keyword>
<keyword id="KW-0630">Potassium</keyword>
<keyword id="KW-0631">Potassium channel</keyword>
<keyword id="KW-0633">Potassium transport</keyword>
<keyword id="KW-1185">Reference proteome</keyword>
<keyword id="KW-0964">Secreted</keyword>
<keyword id="KW-0812">Transmembrane</keyword>
<keyword id="KW-1133">Transmembrane helix</keyword>
<keyword id="KW-0813">Transport</keyword>
<keyword id="KW-0832">Ubl conjugation</keyword>
<keyword id="KW-0851">Voltage-gated channel</keyword>
<proteinExistence type="evidence at protein level"/>
<evidence type="ECO:0000250" key="1">
    <source>
        <dbReference type="UniProtKB" id="Q13563"/>
    </source>
</evidence>
<evidence type="ECO:0000255" key="2"/>
<evidence type="ECO:0000255" key="3">
    <source>
        <dbReference type="PROSITE-ProRule" id="PRU00448"/>
    </source>
</evidence>
<evidence type="ECO:0000256" key="4">
    <source>
        <dbReference type="SAM" id="MobiDB-lite"/>
    </source>
</evidence>
<evidence type="ECO:0000269" key="5">
    <source>
    </source>
</evidence>
<evidence type="ECO:0000269" key="6">
    <source>
    </source>
</evidence>
<evidence type="ECO:0000269" key="7">
    <source>
    </source>
</evidence>
<evidence type="ECO:0000269" key="8">
    <source>
    </source>
</evidence>
<evidence type="ECO:0000269" key="9">
    <source>
    </source>
</evidence>
<evidence type="ECO:0000269" key="10">
    <source>
    </source>
</evidence>
<evidence type="ECO:0000269" key="11">
    <source>
    </source>
</evidence>
<evidence type="ECO:0000269" key="12">
    <source>
    </source>
</evidence>
<evidence type="ECO:0000269" key="13">
    <source>
    </source>
</evidence>
<evidence type="ECO:0000269" key="14">
    <source>
    </source>
</evidence>
<evidence type="ECO:0000269" key="15">
    <source>
    </source>
</evidence>
<evidence type="ECO:0000269" key="16">
    <source>
    </source>
</evidence>
<evidence type="ECO:0000269" key="17">
    <source>
    </source>
</evidence>
<evidence type="ECO:0000269" key="18">
    <source>
    </source>
</evidence>
<evidence type="ECO:0000269" key="19">
    <source>
    </source>
</evidence>
<evidence type="ECO:0000269" key="20">
    <source>
    </source>
</evidence>
<evidence type="ECO:0000269" key="21">
    <source>
    </source>
</evidence>
<evidence type="ECO:0000269" key="22">
    <source>
    </source>
</evidence>
<evidence type="ECO:0000269" key="23">
    <source>
    </source>
</evidence>
<evidence type="ECO:0000269" key="24">
    <source>
    </source>
</evidence>
<evidence type="ECO:0000269" key="25">
    <source>
    </source>
</evidence>
<evidence type="ECO:0000269" key="26">
    <source>
    </source>
</evidence>
<evidence type="ECO:0000269" key="27">
    <source>
    </source>
</evidence>
<evidence type="ECO:0000269" key="28">
    <source>
    </source>
</evidence>
<evidence type="ECO:0000269" key="29">
    <source>
    </source>
</evidence>
<evidence type="ECO:0000269" key="30">
    <source>
    </source>
</evidence>
<evidence type="ECO:0000269" key="31">
    <source>
    </source>
</evidence>
<evidence type="ECO:0000269" key="32">
    <source>
    </source>
</evidence>
<evidence type="ECO:0000269" key="33">
    <source>
    </source>
</evidence>
<evidence type="ECO:0000269" key="34">
    <source>
    </source>
</evidence>
<evidence type="ECO:0000303" key="35">
    <source>
    </source>
</evidence>
<evidence type="ECO:0000303" key="36">
    <source>
    </source>
</evidence>
<evidence type="ECO:0000305" key="37"/>
<evidence type="ECO:0000305" key="38">
    <source>
    </source>
</evidence>
<evidence type="ECO:0000312" key="39">
    <source>
        <dbReference type="MGI" id="MGI:1099818"/>
    </source>
</evidence>
<evidence type="ECO:0007744" key="40">
    <source>
    </source>
</evidence>
<evidence type="ECO:0007744" key="41">
    <source>
    </source>
</evidence>